<dbReference type="EMBL" id="V00565">
    <property type="protein sequence ID" value="CAA23828.1"/>
    <property type="molecule type" value="Genomic_DNA"/>
</dbReference>
<dbReference type="EMBL" id="M10039">
    <property type="protein sequence ID" value="AAA59173.1"/>
    <property type="molecule type" value="Genomic_DNA"/>
</dbReference>
<dbReference type="EMBL" id="J00265">
    <property type="protein sequence ID" value="AAA59172.1"/>
    <property type="molecule type" value="Genomic_DNA"/>
</dbReference>
<dbReference type="EMBL" id="X70508">
    <property type="protein sequence ID" value="CAA49913.1"/>
    <property type="molecule type" value="mRNA"/>
</dbReference>
<dbReference type="EMBL" id="L15440">
    <property type="protein sequence ID" value="AAA59179.1"/>
    <property type="status" value="ALT_SEQ"/>
    <property type="molecule type" value="Genomic_DNA"/>
</dbReference>
<dbReference type="EMBL" id="AY899304">
    <property type="protein sequence ID" value="AAW83741.1"/>
    <property type="molecule type" value="mRNA"/>
</dbReference>
<dbReference type="EMBL" id="AY138590">
    <property type="protein sequence ID" value="AAN39451.1"/>
    <property type="molecule type" value="Genomic_DNA"/>
</dbReference>
<dbReference type="EMBL" id="BT006808">
    <property type="protein sequence ID" value="AAP35454.1"/>
    <property type="molecule type" value="mRNA"/>
</dbReference>
<dbReference type="EMBL" id="CH471158">
    <property type="protein sequence ID" value="EAX02488.1"/>
    <property type="molecule type" value="Genomic_DNA"/>
</dbReference>
<dbReference type="EMBL" id="BC005255">
    <property type="protein sequence ID" value="AAH05255.1"/>
    <property type="molecule type" value="mRNA"/>
</dbReference>
<dbReference type="EMBL" id="AJ009655">
    <property type="protein sequence ID" value="CAA08766.1"/>
    <property type="molecule type" value="Genomic_DNA"/>
</dbReference>
<dbReference type="CCDS" id="CCDS7729.1">
    <molecule id="P01308-1"/>
</dbReference>
<dbReference type="PIR" id="A93222">
    <property type="entry name" value="IPHU"/>
</dbReference>
<dbReference type="RefSeq" id="NP_000198.1">
    <molecule id="P01308-1"/>
    <property type="nucleotide sequence ID" value="NM_000207.3"/>
</dbReference>
<dbReference type="RefSeq" id="NP_001172026.1">
    <molecule id="P01308-1"/>
    <property type="nucleotide sequence ID" value="NM_001185097.2"/>
</dbReference>
<dbReference type="RefSeq" id="NP_001172027.1">
    <molecule id="P01308-1"/>
    <property type="nucleotide sequence ID" value="NM_001185098.2"/>
</dbReference>
<dbReference type="RefSeq" id="NP_001278826.1">
    <molecule id="P01308-1"/>
    <property type="nucleotide sequence ID" value="NM_001291897.2"/>
</dbReference>
<dbReference type="PDB" id="1A7F">
    <property type="method" value="NMR"/>
    <property type="chains" value="A=90-110, B=25-53"/>
</dbReference>
<dbReference type="PDB" id="1AI0">
    <property type="method" value="NMR"/>
    <property type="chains" value="A/C/E/G/I/K=90-110, B/D/F/H/J/L=25-54"/>
</dbReference>
<dbReference type="PDB" id="1AIY">
    <property type="method" value="NMR"/>
    <property type="chains" value="A/C/E/G/I/K=90-110, B/D/F/H/J/L=25-54"/>
</dbReference>
<dbReference type="PDB" id="1B9E">
    <property type="method" value="X-ray"/>
    <property type="resolution" value="2.50 A"/>
    <property type="chains" value="A/C=90-110, B/D=25-54"/>
</dbReference>
<dbReference type="PDB" id="1BEN">
    <property type="method" value="X-ray"/>
    <property type="resolution" value="1.40 A"/>
    <property type="chains" value="A/C=90-110, B/D=25-54"/>
</dbReference>
<dbReference type="PDB" id="1EFE">
    <property type="method" value="NMR"/>
    <property type="chains" value="A=25-54, A=90-110"/>
</dbReference>
<dbReference type="PDB" id="1EV3">
    <property type="method" value="X-ray"/>
    <property type="resolution" value="1.78 A"/>
    <property type="chains" value="A/C=90-110, B/D=25-54"/>
</dbReference>
<dbReference type="PDB" id="1EV6">
    <property type="method" value="X-ray"/>
    <property type="resolution" value="1.90 A"/>
    <property type="chains" value="A/C/E/G/I/K=90-110, B/D/F/H/J/L=25-54"/>
</dbReference>
<dbReference type="PDB" id="1EVR">
    <property type="method" value="X-ray"/>
    <property type="resolution" value="1.90 A"/>
    <property type="chains" value="A/C/E/G/I/K=90-110, B/D/F/H/J/L=25-54"/>
</dbReference>
<dbReference type="PDB" id="1FU2">
    <property type="method" value="X-ray"/>
    <property type="resolution" value="3.24 A"/>
    <property type="chains" value="A/C/E/G=90-110, B/D/F/H=25-54"/>
</dbReference>
<dbReference type="PDB" id="1FUB">
    <property type="method" value="X-ray"/>
    <property type="resolution" value="3.09 A"/>
    <property type="chains" value="A/C=90-110, B/D=25-54"/>
</dbReference>
<dbReference type="PDB" id="1G7A">
    <property type="method" value="X-ray"/>
    <property type="resolution" value="1.20 A"/>
    <property type="chains" value="A/C/E/G=90-110, B/D/F/H=25-54"/>
</dbReference>
<dbReference type="PDB" id="1G7B">
    <property type="method" value="X-ray"/>
    <property type="resolution" value="1.30 A"/>
    <property type="chains" value="A/C/E/G=90-110, B/D/F/H=25-54"/>
</dbReference>
<dbReference type="PDB" id="1GUJ">
    <property type="method" value="X-ray"/>
    <property type="resolution" value="1.62 A"/>
    <property type="chains" value="A/C=90-110, B/D=25-54"/>
</dbReference>
<dbReference type="PDB" id="1HIQ">
    <property type="method" value="NMR"/>
    <property type="chains" value="A=90-110, B=25-54"/>
</dbReference>
<dbReference type="PDB" id="1HIS">
    <property type="method" value="NMR"/>
    <property type="chains" value="A=90-110, B=25-49"/>
</dbReference>
<dbReference type="PDB" id="1HIT">
    <property type="method" value="NMR"/>
    <property type="chains" value="A=90-110, B=25-54"/>
</dbReference>
<dbReference type="PDB" id="1HLS">
    <property type="method" value="NMR"/>
    <property type="chains" value="A=90-110, B=25-54"/>
</dbReference>
<dbReference type="PDB" id="1HTV">
    <property type="method" value="X-ray"/>
    <property type="resolution" value="1.90 A"/>
    <property type="chains" value="A/C/E/G/I/K=90-110, B/D/F/H/J/L=25-51"/>
</dbReference>
<dbReference type="PDB" id="1HUI">
    <property type="method" value="NMR"/>
    <property type="chains" value="A=90-110, B=26-53"/>
</dbReference>
<dbReference type="PDB" id="1IOG">
    <property type="method" value="NMR"/>
    <property type="chains" value="A=90-110, B=25-53"/>
</dbReference>
<dbReference type="PDB" id="1IOH">
    <property type="method" value="NMR"/>
    <property type="chains" value="A=90-110, B=25-53"/>
</dbReference>
<dbReference type="PDB" id="1J73">
    <property type="method" value="X-ray"/>
    <property type="resolution" value="2.00 A"/>
    <property type="chains" value="A/C=90-110, B/D=25-54"/>
</dbReference>
<dbReference type="PDB" id="1JCA">
    <property type="method" value="X-ray"/>
    <property type="resolution" value="2.50 A"/>
    <property type="chains" value="A/C=90-110, B/D=25-54"/>
</dbReference>
<dbReference type="PDB" id="1JCO">
    <property type="method" value="NMR"/>
    <property type="chains" value="A=90-110, B=25-54"/>
</dbReference>
<dbReference type="PDB" id="1JK8">
    <property type="method" value="X-ray"/>
    <property type="resolution" value="2.40 A"/>
    <property type="chains" value="C=35-47"/>
</dbReference>
<dbReference type="PDB" id="1K3M">
    <property type="method" value="NMR"/>
    <property type="chains" value="A=90-110, B=25-54"/>
</dbReference>
<dbReference type="PDB" id="1KMF">
    <property type="method" value="NMR"/>
    <property type="chains" value="A=90-110, B=25-54"/>
</dbReference>
<dbReference type="PDB" id="1LKQ">
    <property type="method" value="NMR"/>
    <property type="chains" value="A=90-110, B=25-54"/>
</dbReference>
<dbReference type="PDB" id="1LPH">
    <property type="method" value="X-ray"/>
    <property type="resolution" value="2.30 A"/>
    <property type="chains" value="A/C=90-110, B/D=25-54"/>
</dbReference>
<dbReference type="PDB" id="1MHI">
    <property type="method" value="NMR"/>
    <property type="chains" value="A=90-110, B=25-54"/>
</dbReference>
<dbReference type="PDB" id="1MHJ">
    <property type="method" value="NMR"/>
    <property type="chains" value="A=90-110, B=25-54"/>
</dbReference>
<dbReference type="PDB" id="1MSO">
    <property type="method" value="X-ray"/>
    <property type="resolution" value="1.00 A"/>
    <property type="chains" value="A/C=90-110, B/D=25-54"/>
</dbReference>
<dbReference type="PDB" id="1OS3">
    <property type="method" value="X-ray"/>
    <property type="resolution" value="1.95 A"/>
    <property type="chains" value="A/C=90-110, B/D=25-54"/>
</dbReference>
<dbReference type="PDB" id="1OS4">
    <property type="method" value="X-ray"/>
    <property type="resolution" value="2.25 A"/>
    <property type="chains" value="A/C/E/G/I/K=90-110, B/D/F/H/J/L=25-54"/>
</dbReference>
<dbReference type="PDB" id="1Q4V">
    <property type="method" value="X-ray"/>
    <property type="resolution" value="2.00 A"/>
    <property type="chains" value="A/C=90-110, B/D=25-54"/>
</dbReference>
<dbReference type="PDB" id="1QIY">
    <property type="method" value="X-ray"/>
    <property type="resolution" value="2.30 A"/>
    <property type="chains" value="A/C/E/G/I/K=90-110, B/D/F/H/J/L=25-54"/>
</dbReference>
<dbReference type="PDB" id="1QIZ">
    <property type="method" value="X-ray"/>
    <property type="resolution" value="2.00 A"/>
    <property type="chains" value="A/C/E/G/I/K=90-110, B/D/F/H/J/L=25-54"/>
</dbReference>
<dbReference type="PDB" id="1QJ0">
    <property type="method" value="X-ray"/>
    <property type="resolution" value="2.40 A"/>
    <property type="chains" value="A/C=90-110, B/D=25-54"/>
</dbReference>
<dbReference type="PDB" id="1RWE">
    <property type="method" value="X-ray"/>
    <property type="resolution" value="1.80 A"/>
    <property type="chains" value="A/C=90-110, B/D=25-54"/>
</dbReference>
<dbReference type="PDB" id="1SF1">
    <property type="method" value="NMR"/>
    <property type="chains" value="A=90-110, B=25-54"/>
</dbReference>
<dbReference type="PDB" id="1SJT">
    <property type="method" value="NMR"/>
    <property type="chains" value="A=90-110, B=25-51"/>
</dbReference>
<dbReference type="PDB" id="1SJU">
    <property type="method" value="NMR"/>
    <property type="chains" value="A=25-110"/>
</dbReference>
<dbReference type="PDB" id="1T0C">
    <property type="method" value="NMR"/>
    <property type="chains" value="A=57-87"/>
</dbReference>
<dbReference type="PDB" id="1T1K">
    <property type="method" value="NMR"/>
    <property type="chains" value="A=90-110, B=25-54"/>
</dbReference>
<dbReference type="PDB" id="1T1P">
    <property type="method" value="NMR"/>
    <property type="chains" value="A=90-110, B=25-54"/>
</dbReference>
<dbReference type="PDB" id="1T1Q">
    <property type="method" value="NMR"/>
    <property type="chains" value="A=90-110, B=25-54"/>
</dbReference>
<dbReference type="PDB" id="1TRZ">
    <property type="method" value="X-ray"/>
    <property type="resolution" value="1.60 A"/>
    <property type="chains" value="A/C=90-110, B/D=25-54"/>
</dbReference>
<dbReference type="PDB" id="1TYL">
    <property type="method" value="X-ray"/>
    <property type="resolution" value="1.90 A"/>
    <property type="chains" value="A/C=90-110, B/D=25-54"/>
</dbReference>
<dbReference type="PDB" id="1TYM">
    <property type="method" value="X-ray"/>
    <property type="resolution" value="1.90 A"/>
    <property type="chains" value="A/C=90-110, B/D=25-54"/>
</dbReference>
<dbReference type="PDB" id="1UZ9">
    <property type="method" value="X-ray"/>
    <property type="resolution" value="1.60 A"/>
    <property type="chains" value="A=90-110, B=25-53"/>
</dbReference>
<dbReference type="PDB" id="1VKT">
    <property type="method" value="NMR"/>
    <property type="chains" value="A=90-110, B=25-54"/>
</dbReference>
<dbReference type="PDB" id="1W8P">
    <property type="method" value="X-ray"/>
    <property type="resolution" value="2.08 A"/>
    <property type="chains" value="A/C/E/G/I/K=90-110, B/D/F/H/J/L=25-54"/>
</dbReference>
<dbReference type="PDB" id="1XDA">
    <property type="method" value="X-ray"/>
    <property type="resolution" value="1.80 A"/>
    <property type="chains" value="A/C/E/G=90-110, B/D/F/H=25-53"/>
</dbReference>
<dbReference type="PDB" id="1XGL">
    <property type="method" value="NMR"/>
    <property type="chains" value="A=90-110, B=25-54"/>
</dbReference>
<dbReference type="PDB" id="1XW7">
    <property type="method" value="X-ray"/>
    <property type="resolution" value="2.30 A"/>
    <property type="chains" value="A/C=90-110, B/D=25-54"/>
</dbReference>
<dbReference type="PDB" id="1ZEG">
    <property type="method" value="X-ray"/>
    <property type="resolution" value="1.60 A"/>
    <property type="chains" value="A/C=90-110, B/D=25-54"/>
</dbReference>
<dbReference type="PDB" id="1ZEH">
    <property type="method" value="X-ray"/>
    <property type="resolution" value="1.50 A"/>
    <property type="chains" value="A/C=90-110, B/D=25-54"/>
</dbReference>
<dbReference type="PDB" id="1ZNJ">
    <property type="method" value="X-ray"/>
    <property type="resolution" value="2.00 A"/>
    <property type="chains" value="A/C/E/G/I/K=90-110, B/D/F/H/J/L=25-54"/>
</dbReference>
<dbReference type="PDB" id="2AIY">
    <property type="method" value="NMR"/>
    <property type="chains" value="A/C/E/G/I/K=90-110, B/D/F/H/J/L=25-54"/>
</dbReference>
<dbReference type="PDB" id="2C8Q">
    <property type="method" value="X-ray"/>
    <property type="resolution" value="1.95 A"/>
    <property type="chains" value="A=90-110, B=25-53"/>
</dbReference>
<dbReference type="PDB" id="2C8R">
    <property type="method" value="X-ray"/>
    <property type="resolution" value="1.50 A"/>
    <property type="chains" value="A=90-110, B=25-53"/>
</dbReference>
<dbReference type="PDB" id="2CEU">
    <property type="method" value="X-ray"/>
    <property type="resolution" value="1.80 A"/>
    <property type="chains" value="A/C=90-110, B/D=25-49"/>
</dbReference>
<dbReference type="PDB" id="2G54">
    <property type="method" value="X-ray"/>
    <property type="resolution" value="2.25 A"/>
    <property type="chains" value="C/D=25-54"/>
</dbReference>
<dbReference type="PDB" id="2G56">
    <property type="method" value="X-ray"/>
    <property type="resolution" value="2.20 A"/>
    <property type="chains" value="C/D=25-54"/>
</dbReference>
<dbReference type="PDB" id="2H67">
    <property type="method" value="NMR"/>
    <property type="chains" value="A=90-110, B=25-54"/>
</dbReference>
<dbReference type="PDB" id="2HH4">
    <property type="method" value="NMR"/>
    <property type="chains" value="A=90-110, B=25-54"/>
</dbReference>
<dbReference type="PDB" id="2HHO">
    <property type="method" value="NMR"/>
    <property type="chains" value="A=90-110, B=25-54"/>
</dbReference>
<dbReference type="PDB" id="2HIU">
    <property type="method" value="NMR"/>
    <property type="chains" value="A=90-110, B=25-54"/>
</dbReference>
<dbReference type="PDB" id="2JMN">
    <property type="method" value="NMR"/>
    <property type="chains" value="A=90-110, B=25-54"/>
</dbReference>
<dbReference type="PDB" id="2JUM">
    <property type="method" value="NMR"/>
    <property type="chains" value="A=90-110, B=25-54"/>
</dbReference>
<dbReference type="PDB" id="2JUU">
    <property type="method" value="NMR"/>
    <property type="chains" value="A=90-110, B=25-54"/>
</dbReference>
<dbReference type="PDB" id="2JUV">
    <property type="method" value="NMR"/>
    <property type="chains" value="A=90-110, B=25-54"/>
</dbReference>
<dbReference type="PDB" id="2JV1">
    <property type="method" value="NMR"/>
    <property type="chains" value="A=90-110, B=25-54"/>
</dbReference>
<dbReference type="PDB" id="2JZQ">
    <property type="method" value="NMR"/>
    <property type="chains" value="A=25-54, A=90-110"/>
</dbReference>
<dbReference type="PDB" id="2K91">
    <property type="method" value="NMR"/>
    <property type="chains" value="A=90-110, B=25-54"/>
</dbReference>
<dbReference type="PDB" id="2K9R">
    <property type="method" value="NMR"/>
    <property type="chains" value="A=90-110, B=25-54"/>
</dbReference>
<dbReference type="PDB" id="2KJJ">
    <property type="method" value="NMR"/>
    <property type="chains" value="A=90-110, B=25-54"/>
</dbReference>
<dbReference type="PDB" id="2KJU">
    <property type="method" value="NMR"/>
    <property type="chains" value="A=90-110, B=25-54"/>
</dbReference>
<dbReference type="PDB" id="2KQP">
    <property type="method" value="NMR"/>
    <property type="chains" value="A=25-110"/>
</dbReference>
<dbReference type="PDB" id="2KQQ">
    <property type="method" value="NMR"/>
    <property type="chains" value="A=90-110, B=25-54"/>
</dbReference>
<dbReference type="PDB" id="2KXK">
    <property type="method" value="NMR"/>
    <property type="chains" value="A=90-110, B=25-54"/>
</dbReference>
<dbReference type="PDB" id="2L1Y">
    <property type="method" value="NMR"/>
    <property type="chains" value="A=90-110, B=25-54"/>
</dbReference>
<dbReference type="PDB" id="2L1Z">
    <property type="method" value="NMR"/>
    <property type="chains" value="A=90-110, B=25-54"/>
</dbReference>
<dbReference type="PDB" id="2LGB">
    <property type="method" value="NMR"/>
    <property type="chains" value="A=90-110, B=25-55"/>
</dbReference>
<dbReference type="PDB" id="2LWZ">
    <property type="method" value="NMR"/>
    <property type="chains" value="A=25-54, A=89-110"/>
</dbReference>
<dbReference type="PDB" id="2M1D">
    <property type="method" value="NMR"/>
    <property type="chains" value="A=90-110, B=25-54"/>
</dbReference>
<dbReference type="PDB" id="2M1E">
    <property type="method" value="NMR"/>
    <property type="chains" value="A=90-110, B=25-54"/>
</dbReference>
<dbReference type="PDB" id="2M2M">
    <property type="method" value="NMR"/>
    <property type="chains" value="A=90-110, B=25-54"/>
</dbReference>
<dbReference type="PDB" id="2M2N">
    <property type="method" value="NMR"/>
    <property type="chains" value="A=90-110, B=25-54"/>
</dbReference>
<dbReference type="PDB" id="2M2O">
    <property type="method" value="NMR"/>
    <property type="chains" value="A=90-110, B=25-54"/>
</dbReference>
<dbReference type="PDB" id="2M2P">
    <property type="method" value="NMR"/>
    <property type="chains" value="A=90-110, B=25-54"/>
</dbReference>
<dbReference type="PDB" id="2MLI">
    <property type="method" value="NMR"/>
    <property type="chains" value="A=90-110, B=25-54"/>
</dbReference>
<dbReference type="PDB" id="2MPG">
    <property type="method" value="NMR"/>
    <property type="chains" value="A=90-110, B=25-54"/>
</dbReference>
<dbReference type="PDB" id="2MPI">
    <property type="method" value="NMR"/>
    <property type="chains" value="A=90-110, B=25-54"/>
</dbReference>
<dbReference type="PDB" id="2MVC">
    <property type="method" value="NMR"/>
    <property type="chains" value="A=90-110, B=25-54"/>
</dbReference>
<dbReference type="PDB" id="2MVD">
    <property type="method" value="NMR"/>
    <property type="chains" value="A=90-110, B=25-54"/>
</dbReference>
<dbReference type="PDB" id="2N2V">
    <property type="method" value="NMR"/>
    <property type="chains" value="A=90-110, B=25-54"/>
</dbReference>
<dbReference type="PDB" id="2N2W">
    <property type="method" value="NMR"/>
    <property type="chains" value="A=90-110, B=25-54"/>
</dbReference>
<dbReference type="PDB" id="2N2X">
    <property type="method" value="NMR"/>
    <property type="chains" value="A=90-110, B=25-54"/>
</dbReference>
<dbReference type="PDB" id="2OLY">
    <property type="method" value="X-ray"/>
    <property type="resolution" value="1.70 A"/>
    <property type="chains" value="A/C/E/G/I/K=90-110, B/D/F/H/J/L=25-54"/>
</dbReference>
<dbReference type="PDB" id="2OLZ">
    <property type="method" value="X-ray"/>
    <property type="resolution" value="1.70 A"/>
    <property type="chains" value="A/C/E/G/I/K=90-110, B/D/F/H/J/L=25-54"/>
</dbReference>
<dbReference type="PDB" id="2OM0">
    <property type="method" value="X-ray"/>
    <property type="resolution" value="2.05 A"/>
    <property type="chains" value="1/3/A/C/E/G/I/K/Q/S/U/X/a/c/e/g/i/k=90-110, 2/4/B/D/F/H/J/L/R/T/V/Y/b/d/f/h/j/l=25-54"/>
</dbReference>
<dbReference type="PDB" id="2OM1">
    <property type="method" value="X-ray"/>
    <property type="resolution" value="1.97 A"/>
    <property type="chains" value="1/3/A/C/E/G/I/K/Q/S/U/X/a/c/e/g/i/k=90-110, 2/4/B/D/F/H/J/L/R/T/V/Y/b/d/f/h/j/l=25-54"/>
</dbReference>
<dbReference type="PDB" id="2OMG">
    <property type="method" value="X-ray"/>
    <property type="resolution" value="1.52 A"/>
    <property type="chains" value="A/C/E=90-110, B/D/F=25-54"/>
</dbReference>
<dbReference type="PDB" id="2OMH">
    <property type="method" value="X-ray"/>
    <property type="resolution" value="1.36 A"/>
    <property type="chains" value="A/C/E=90-110, B/D/F=25-54"/>
</dbReference>
<dbReference type="PDB" id="2OMI">
    <property type="method" value="X-ray"/>
    <property type="resolution" value="2.24 A"/>
    <property type="chains" value="A/C/E/G/I/K=90-110, B/D/F/H/J/L=25-54"/>
</dbReference>
<dbReference type="PDB" id="2OMQ">
    <property type="method" value="X-ray"/>
    <property type="resolution" value="2.00 A"/>
    <property type="chains" value="A/B/C/D=36-41"/>
</dbReference>
<dbReference type="PDB" id="2QIU">
    <property type="method" value="X-ray"/>
    <property type="resolution" value="2.00 A"/>
    <property type="chains" value="A/C=89-110, B/D=25-54"/>
</dbReference>
<dbReference type="PDB" id="2R34">
    <property type="method" value="X-ray"/>
    <property type="resolution" value="2.25 A"/>
    <property type="chains" value="A/C=89-110, B/D=25-54"/>
</dbReference>
<dbReference type="PDB" id="2R35">
    <property type="method" value="X-ray"/>
    <property type="resolution" value="2.08 A"/>
    <property type="chains" value="A/C=89-110, B/D=25-54"/>
</dbReference>
<dbReference type="PDB" id="2R36">
    <property type="method" value="X-ray"/>
    <property type="resolution" value="2.00 A"/>
    <property type="chains" value="A/C=89-110, B/D=25-54"/>
</dbReference>
<dbReference type="PDB" id="2RN5">
    <property type="method" value="NMR"/>
    <property type="chains" value="A=90-110, B=25-54"/>
</dbReference>
<dbReference type="PDB" id="2VJZ">
    <property type="method" value="X-ray"/>
    <property type="resolution" value="1.80 A"/>
    <property type="chains" value="A/C=90-110, B/D=25-54"/>
</dbReference>
<dbReference type="PDB" id="2VK0">
    <property type="method" value="X-ray"/>
    <property type="resolution" value="2.20 A"/>
    <property type="chains" value="A/C=90-110, B/D=25-54"/>
</dbReference>
<dbReference type="PDB" id="2W44">
    <property type="method" value="X-ray"/>
    <property type="resolution" value="2.00 A"/>
    <property type="chains" value="A/C/E=94-110, B/D/F=25-53"/>
</dbReference>
<dbReference type="PDB" id="2WBY">
    <property type="method" value="X-ray"/>
    <property type="resolution" value="2.60 A"/>
    <property type="chains" value="C/E=90-109, D/F=25-43"/>
</dbReference>
<dbReference type="PDB" id="2WC0">
    <property type="method" value="X-ray"/>
    <property type="resolution" value="2.80 A"/>
    <property type="chains" value="C/E=90-110, D/F=25-54"/>
</dbReference>
<dbReference type="PDB" id="2WRU">
    <property type="method" value="X-ray"/>
    <property type="resolution" value="1.57 A"/>
    <property type="chains" value="A=90-110, B=25-50"/>
</dbReference>
<dbReference type="PDB" id="2WRV">
    <property type="method" value="X-ray"/>
    <property type="resolution" value="2.15 A"/>
    <property type="chains" value="A=90-110, B=25-50"/>
</dbReference>
<dbReference type="PDB" id="2WRW">
    <property type="method" value="X-ray"/>
    <property type="resolution" value="2.41 A"/>
    <property type="chains" value="A=90-110, B=25-50"/>
</dbReference>
<dbReference type="PDB" id="2WRX">
    <property type="method" value="X-ray"/>
    <property type="resolution" value="1.50 A"/>
    <property type="chains" value="A/C=90-110, B/D=25-54"/>
</dbReference>
<dbReference type="PDB" id="2WS0">
    <property type="method" value="X-ray"/>
    <property type="resolution" value="2.10 A"/>
    <property type="chains" value="A=90-110, B=25-54"/>
</dbReference>
<dbReference type="PDB" id="2WS1">
    <property type="method" value="X-ray"/>
    <property type="resolution" value="1.60 A"/>
    <property type="chains" value="A=90-110, B=25-54"/>
</dbReference>
<dbReference type="PDB" id="2WS4">
    <property type="method" value="X-ray"/>
    <property type="resolution" value="1.90 A"/>
    <property type="chains" value="A=90-110, B=25-50"/>
</dbReference>
<dbReference type="PDB" id="2WS6">
    <property type="method" value="X-ray"/>
    <property type="resolution" value="1.50 A"/>
    <property type="chains" value="A/C/E/G/I/K=90-110, B/D/F/H/J/L=25-54"/>
</dbReference>
<dbReference type="PDB" id="2WS7">
    <property type="method" value="X-ray"/>
    <property type="resolution" value="2.59 A"/>
    <property type="chains" value="A/C/E/G/I/K=90-110, B/D/F/H/J/L=25-50"/>
</dbReference>
<dbReference type="PDB" id="3AIY">
    <property type="method" value="NMR"/>
    <property type="chains" value="A/C/E/G/I/K=90-110, B/D/F/H/J/L=25-54"/>
</dbReference>
<dbReference type="PDB" id="3BXQ">
    <property type="method" value="X-ray"/>
    <property type="resolution" value="1.30 A"/>
    <property type="chains" value="A/C=90-110, B/D=25-54"/>
</dbReference>
<dbReference type="PDB" id="3E7Y">
    <property type="method" value="X-ray"/>
    <property type="resolution" value="1.60 A"/>
    <property type="chains" value="A/C=90-110, B/D=25-53"/>
</dbReference>
<dbReference type="PDB" id="3E7Z">
    <property type="method" value="X-ray"/>
    <property type="resolution" value="1.70 A"/>
    <property type="chains" value="A/C=90-110, B/D=25-53"/>
</dbReference>
<dbReference type="PDB" id="3EXX">
    <property type="method" value="X-ray"/>
    <property type="resolution" value="1.35 A"/>
    <property type="chains" value="A/C=90-110, B/D=25-54"/>
</dbReference>
<dbReference type="PDB" id="3FQ9">
    <property type="method" value="X-ray"/>
    <property type="resolution" value="1.35 A"/>
    <property type="chains" value="A/C=91-110, B/D=25-54"/>
</dbReference>
<dbReference type="PDB" id="3HYD">
    <property type="method" value="X-ray"/>
    <property type="resolution" value="1.00 A"/>
    <property type="chains" value="A=35-41"/>
</dbReference>
<dbReference type="PDB" id="3I3Z">
    <property type="method" value="X-ray"/>
    <property type="resolution" value="1.60 A"/>
    <property type="chains" value="A=90-110, B=25-54"/>
</dbReference>
<dbReference type="PDB" id="3I40">
    <property type="method" value="X-ray"/>
    <property type="resolution" value="1.85 A"/>
    <property type="chains" value="A=90-110, B=25-54"/>
</dbReference>
<dbReference type="PDB" id="3ILG">
    <property type="method" value="X-ray"/>
    <property type="resolution" value="1.90 A"/>
    <property type="chains" value="A/C=90-110, B/D=25-54"/>
</dbReference>
<dbReference type="PDB" id="3INC">
    <property type="method" value="X-ray"/>
    <property type="resolution" value="1.85 A"/>
    <property type="chains" value="A/C=90-110, B/D=25-54"/>
</dbReference>
<dbReference type="PDB" id="3IR0">
    <property type="method" value="X-ray"/>
    <property type="resolution" value="2.20 A"/>
    <property type="chains" value="A/C/E/G/I/K/M/O/R/T/V/X=90-110, B/D/F/H/J/L/N/P/S/U/W/Y=25-54"/>
</dbReference>
<dbReference type="PDB" id="3JSD">
    <property type="method" value="X-ray"/>
    <property type="resolution" value="2.50 A"/>
    <property type="chains" value="A/C=90-110, B/D=25-54"/>
</dbReference>
<dbReference type="PDB" id="3KQ6">
    <property type="method" value="X-ray"/>
    <property type="resolution" value="1.90 A"/>
    <property type="chains" value="A/C=90-110, B/D=25-54"/>
</dbReference>
<dbReference type="PDB" id="3P2X">
    <property type="method" value="X-ray"/>
    <property type="resolution" value="2.00 A"/>
    <property type="chains" value="A/C=90-110, B/D=25-54"/>
</dbReference>
<dbReference type="PDB" id="3P33">
    <property type="method" value="X-ray"/>
    <property type="resolution" value="2.30 A"/>
    <property type="chains" value="A/C/E/G=90-110, B/D/F/H=25-54"/>
</dbReference>
<dbReference type="PDB" id="3Q6E">
    <property type="method" value="X-ray"/>
    <property type="resolution" value="2.05 A"/>
    <property type="chains" value="A/C=90-110, B/D=25-54"/>
</dbReference>
<dbReference type="PDB" id="3ROV">
    <property type="method" value="X-ray"/>
    <property type="resolution" value="2.30 A"/>
    <property type="chains" value="A/C/E/G/I/K=90-110, B/D/F/H/J/L=25-54"/>
</dbReference>
<dbReference type="PDB" id="3TT8">
    <property type="method" value="X-ray"/>
    <property type="resolution" value="1.12 A"/>
    <property type="chains" value="A/C=90-110, B/D=25-54"/>
</dbReference>
<dbReference type="PDB" id="3U4N">
    <property type="method" value="X-ray"/>
    <property type="resolution" value="1.98 A"/>
    <property type="chains" value="A=90-110, B=25-53"/>
</dbReference>
<dbReference type="PDB" id="3UTQ">
    <property type="method" value="X-ray"/>
    <property type="resolution" value="1.67 A"/>
    <property type="chains" value="C=15-24"/>
</dbReference>
<dbReference type="PDB" id="3UTS">
    <property type="method" value="X-ray"/>
    <property type="resolution" value="2.71 A"/>
    <property type="chains" value="C/H=15-24"/>
</dbReference>
<dbReference type="PDB" id="3UTT">
    <property type="method" value="X-ray"/>
    <property type="resolution" value="2.60 A"/>
    <property type="chains" value="C/H=15-24"/>
</dbReference>
<dbReference type="PDB" id="3V19">
    <property type="method" value="X-ray"/>
    <property type="resolution" value="2.00 A"/>
    <property type="chains" value="A/C=90-110, B/D=25-54"/>
</dbReference>
<dbReference type="PDB" id="3V1G">
    <property type="method" value="X-ray"/>
    <property type="resolution" value="2.20 A"/>
    <property type="chains" value="A/C=90-110, B/D=25-54"/>
</dbReference>
<dbReference type="PDB" id="3W11">
    <property type="method" value="X-ray"/>
    <property type="resolution" value="3.90 A"/>
    <property type="chains" value="A=90-110, B=25-54"/>
</dbReference>
<dbReference type="PDB" id="3W12">
    <property type="method" value="X-ray"/>
    <property type="resolution" value="4.30 A"/>
    <property type="chains" value="A=90-110, B=25-50"/>
</dbReference>
<dbReference type="PDB" id="3W13">
    <property type="method" value="X-ray"/>
    <property type="resolution" value="4.30 A"/>
    <property type="chains" value="A=90-110, B=25-50"/>
</dbReference>
<dbReference type="PDB" id="3W7Y">
    <property type="method" value="X-ray"/>
    <property type="resolution" value="0.92 A"/>
    <property type="chains" value="A/C=90-110, B/D=25-54"/>
</dbReference>
<dbReference type="PDB" id="3W7Z">
    <property type="method" value="X-ray"/>
    <property type="resolution" value="1.15 A"/>
    <property type="chains" value="A/C=90-110, B/D=25-54"/>
</dbReference>
<dbReference type="PDB" id="3W80">
    <property type="method" value="X-ray"/>
    <property type="resolution" value="1.40 A"/>
    <property type="chains" value="A/C/E/G=90-110, B/D/F/H=25-54"/>
</dbReference>
<dbReference type="PDB" id="3ZI3">
    <property type="method" value="X-ray"/>
    <property type="resolution" value="1.70 A"/>
    <property type="chains" value="A=90-110, B=25-54"/>
</dbReference>
<dbReference type="PDB" id="3ZQR">
    <property type="method" value="X-ray"/>
    <property type="resolution" value="1.90 A"/>
    <property type="chains" value="A/C/E/G/I/K=90-110, B/D/F/H/J/L=25-54"/>
</dbReference>
<dbReference type="PDB" id="3ZS2">
    <property type="method" value="X-ray"/>
    <property type="resolution" value="1.97 A"/>
    <property type="chains" value="A/C/E/G/I/K=90-110, B/D/F/H/J/L=25-54"/>
</dbReference>
<dbReference type="PDB" id="3ZU1">
    <property type="method" value="X-ray"/>
    <property type="resolution" value="1.60 A"/>
    <property type="chains" value="A/C=90-110, B/D=25-54"/>
</dbReference>
<dbReference type="PDB" id="4AIY">
    <property type="method" value="NMR"/>
    <property type="chains" value="A/C/E/G/I/K=90-110, B/D/F/H/J/L=25-54"/>
</dbReference>
<dbReference type="PDB" id="4AJX">
    <property type="method" value="X-ray"/>
    <property type="resolution" value="1.20 A"/>
    <property type="chains" value="A/C/E/G/I/K=90-110, B/D/F/H/J/L=25-53"/>
</dbReference>
<dbReference type="PDB" id="4AJZ">
    <property type="method" value="X-ray"/>
    <property type="resolution" value="1.80 A"/>
    <property type="chains" value="A/C=90-110, B/D=25-53"/>
</dbReference>
<dbReference type="PDB" id="4AK0">
    <property type="method" value="X-ray"/>
    <property type="resolution" value="2.28 A"/>
    <property type="chains" value="A=90-110, B=25-53"/>
</dbReference>
<dbReference type="PDB" id="4AKJ">
    <property type="method" value="X-ray"/>
    <property type="resolution" value="2.01 A"/>
    <property type="chains" value="A/C=90-110, B/D=25-53"/>
</dbReference>
<dbReference type="PDB" id="4CXL">
    <property type="method" value="X-ray"/>
    <property type="resolution" value="1.50 A"/>
    <property type="chains" value="A=90-110, B=25-54"/>
</dbReference>
<dbReference type="PDB" id="4CXN">
    <property type="method" value="X-ray"/>
    <property type="resolution" value="1.70 A"/>
    <property type="chains" value="A=90-110, B=25-54"/>
</dbReference>
<dbReference type="PDB" id="4CY7">
    <property type="method" value="X-ray"/>
    <property type="resolution" value="1.40 A"/>
    <property type="chains" value="A/C=90-110, B/D=25-54"/>
</dbReference>
<dbReference type="PDB" id="4EFX">
    <property type="method" value="X-ray"/>
    <property type="resolution" value="1.98 A"/>
    <property type="chains" value="A/C=90-110, B/D=25-52"/>
</dbReference>
<dbReference type="PDB" id="4EWW">
    <property type="method" value="X-ray"/>
    <property type="resolution" value="2.30 A"/>
    <property type="chains" value="A/C=90-110, B/D=25-54"/>
</dbReference>
<dbReference type="PDB" id="4EWX">
    <property type="method" value="X-ray"/>
    <property type="resolution" value="2.20 A"/>
    <property type="chains" value="A/C=90-110, B/D=25-54"/>
</dbReference>
<dbReference type="PDB" id="4EWZ">
    <property type="method" value="X-ray"/>
    <property type="resolution" value="1.79 A"/>
    <property type="chains" value="A/C=90-110, B/D=25-54"/>
</dbReference>
<dbReference type="PDB" id="4EX0">
    <property type="method" value="X-ray"/>
    <property type="resolution" value="1.86 A"/>
    <property type="chains" value="A/C=90-110, B/D=25-54"/>
</dbReference>
<dbReference type="PDB" id="4EX1">
    <property type="method" value="X-ray"/>
    <property type="resolution" value="1.66 A"/>
    <property type="chains" value="A/C=90-110, B/D=25-54"/>
</dbReference>
<dbReference type="PDB" id="4EXX">
    <property type="method" value="X-ray"/>
    <property type="resolution" value="1.55 A"/>
    <property type="chains" value="A/C=90-110, B/D=25-54"/>
</dbReference>
<dbReference type="PDB" id="4EY1">
    <property type="method" value="X-ray"/>
    <property type="resolution" value="1.47 A"/>
    <property type="chains" value="A/C=90-110, B/D=25-54"/>
</dbReference>
<dbReference type="PDB" id="4EY9">
    <property type="method" value="X-ray"/>
    <property type="resolution" value="1.47 A"/>
    <property type="chains" value="A/C=90-110, B/D=25-54"/>
</dbReference>
<dbReference type="PDB" id="4EYD">
    <property type="method" value="X-ray"/>
    <property type="resolution" value="1.47 A"/>
    <property type="chains" value="A/C=90-110, B/D=25-54"/>
</dbReference>
<dbReference type="PDB" id="4EYN">
    <property type="method" value="X-ray"/>
    <property type="resolution" value="1.53 A"/>
    <property type="chains" value="A/C=90-110, B/D=25-54"/>
</dbReference>
<dbReference type="PDB" id="4EYP">
    <property type="method" value="X-ray"/>
    <property type="resolution" value="1.59 A"/>
    <property type="chains" value="A/C=90-110, B/D=25-54"/>
</dbReference>
<dbReference type="PDB" id="4F0N">
    <property type="method" value="X-ray"/>
    <property type="resolution" value="1.68 A"/>
    <property type="chains" value="A/C=90-110, B/D=25-54"/>
</dbReference>
<dbReference type="PDB" id="4F0O">
    <property type="method" value="X-ray"/>
    <property type="resolution" value="1.67 A"/>
    <property type="chains" value="A/C=90-110, B/D=25-54"/>
</dbReference>
<dbReference type="PDB" id="4F1A">
    <property type="method" value="X-ray"/>
    <property type="resolution" value="1.80 A"/>
    <property type="chains" value="A/C=90-110, B/D=25-54"/>
</dbReference>
<dbReference type="PDB" id="4F1B">
    <property type="method" value="X-ray"/>
    <property type="resolution" value="1.59 A"/>
    <property type="chains" value="A/C=90-110, B/D=25-54"/>
</dbReference>
<dbReference type="PDB" id="4F1C">
    <property type="method" value="X-ray"/>
    <property type="resolution" value="1.70 A"/>
    <property type="chains" value="A/C=90-110, B/D=25-54"/>
</dbReference>
<dbReference type="PDB" id="4F1D">
    <property type="method" value="X-ray"/>
    <property type="resolution" value="1.64 A"/>
    <property type="chains" value="A/C=90-110, B/D=25-54"/>
</dbReference>
<dbReference type="PDB" id="4F1F">
    <property type="method" value="X-ray"/>
    <property type="resolution" value="1.68 A"/>
    <property type="chains" value="A/C=90-110, B/D=25-54"/>
</dbReference>
<dbReference type="PDB" id="4F1G">
    <property type="method" value="X-ray"/>
    <property type="resolution" value="1.64 A"/>
    <property type="chains" value="A/C=90-110, B/D=25-54"/>
</dbReference>
<dbReference type="PDB" id="4F4T">
    <property type="method" value="X-ray"/>
    <property type="resolution" value="1.64 A"/>
    <property type="chains" value="A/C=90-110, B/D=25-54"/>
</dbReference>
<dbReference type="PDB" id="4F4V">
    <property type="method" value="X-ray"/>
    <property type="resolution" value="1.64 A"/>
    <property type="chains" value="A/C=90-110, B/D=25-54"/>
</dbReference>
<dbReference type="PDB" id="4F51">
    <property type="method" value="X-ray"/>
    <property type="resolution" value="1.64 A"/>
    <property type="chains" value="A/C=90-110, B/D=25-54"/>
</dbReference>
<dbReference type="PDB" id="4F8F">
    <property type="method" value="X-ray"/>
    <property type="resolution" value="1.68 A"/>
    <property type="chains" value="A/C=90-110, B/D=25-54"/>
</dbReference>
<dbReference type="PDB" id="4FG3">
    <property type="method" value="X-ray"/>
    <property type="resolution" value="2.00 A"/>
    <property type="chains" value="A/C=90-110, B/D=25-54"/>
</dbReference>
<dbReference type="PDB" id="4FKA">
    <property type="method" value="X-ray"/>
    <property type="resolution" value="1.08 A"/>
    <property type="chains" value="A/C=90-110, B/D=25-54"/>
</dbReference>
<dbReference type="PDB" id="4GBC">
    <property type="method" value="X-ray"/>
    <property type="resolution" value="1.78 A"/>
    <property type="chains" value="A/C=90-110, B/D=25-54"/>
</dbReference>
<dbReference type="PDB" id="4GBI">
    <property type="method" value="X-ray"/>
    <property type="resolution" value="2.50 A"/>
    <property type="chains" value="A/C=90-110, B/D=25-54"/>
</dbReference>
<dbReference type="PDB" id="4GBK">
    <property type="method" value="X-ray"/>
    <property type="resolution" value="2.40 A"/>
    <property type="chains" value="A/C=90-110, B/D=25-54"/>
</dbReference>
<dbReference type="PDB" id="4GBL">
    <property type="method" value="X-ray"/>
    <property type="resolution" value="2.50 A"/>
    <property type="chains" value="A/C=90-110, B/D=25-54"/>
</dbReference>
<dbReference type="PDB" id="4GBN">
    <property type="method" value="X-ray"/>
    <property type="resolution" value="1.87 A"/>
    <property type="chains" value="A/C=90-110, B/D=25-54"/>
</dbReference>
<dbReference type="PDB" id="4IUZ">
    <property type="method" value="X-ray"/>
    <property type="resolution" value="1.60 A"/>
    <property type="chains" value="A=90-110, B=25-54"/>
</dbReference>
<dbReference type="PDB" id="4IYD">
    <property type="method" value="X-ray"/>
    <property type="resolution" value="1.66 A"/>
    <property type="chains" value="A=90-109, B=25-53"/>
</dbReference>
<dbReference type="PDB" id="4IYF">
    <property type="method" value="X-ray"/>
    <property type="resolution" value="1.80 A"/>
    <property type="chains" value="A=90-109, B=25-53"/>
</dbReference>
<dbReference type="PDB" id="4NIB">
    <property type="method" value="X-ray"/>
    <property type="resolution" value="1.40 A"/>
    <property type="chains" value="A=90-110, B=25-54"/>
</dbReference>
<dbReference type="PDB" id="4OGA">
    <property type="method" value="X-ray"/>
    <property type="resolution" value="3.50 A"/>
    <property type="chains" value="A=90-110, B=25-54"/>
</dbReference>
<dbReference type="PDB" id="4P65">
    <property type="method" value="X-ray"/>
    <property type="resolution" value="1.50 A"/>
    <property type="chains" value="A/C/E/G/I/K=90-110, B/D/F/H/J/L=25-54"/>
</dbReference>
<dbReference type="PDB" id="4RXW">
    <property type="method" value="X-ray"/>
    <property type="resolution" value="1.73 A"/>
    <property type="chains" value="A/C=90-110, B/D=25-54"/>
</dbReference>
<dbReference type="PDB" id="4UNE">
    <property type="method" value="X-ray"/>
    <property type="resolution" value="1.59 A"/>
    <property type="chains" value="A/C=90-110, B/D=25-54"/>
</dbReference>
<dbReference type="PDB" id="4UNG">
    <property type="method" value="X-ray"/>
    <property type="resolution" value="1.81 A"/>
    <property type="chains" value="A/C=90-110, B/D=25-54"/>
</dbReference>
<dbReference type="PDB" id="4UNH">
    <property type="method" value="X-ray"/>
    <property type="resolution" value="2.75 A"/>
    <property type="chains" value="A=90-110, B=25-54"/>
</dbReference>
<dbReference type="PDB" id="4WDI">
    <property type="method" value="X-ray"/>
    <property type="resolution" value="2.31 A"/>
    <property type="chains" value="C/F=39-47"/>
</dbReference>
<dbReference type="PDB" id="4XC4">
    <property type="method" value="X-ray"/>
    <property type="resolution" value="1.50 A"/>
    <property type="chains" value="A/C=90-110, B/D=25-54"/>
</dbReference>
<dbReference type="PDB" id="4Y19">
    <property type="method" value="X-ray"/>
    <property type="resolution" value="2.50 A"/>
    <property type="chains" value="C=75-90"/>
</dbReference>
<dbReference type="PDB" id="4Y1A">
    <property type="method" value="X-ray"/>
    <property type="resolution" value="4.00 A"/>
    <property type="chains" value="C=75-90"/>
</dbReference>
<dbReference type="PDB" id="4Z76">
    <property type="method" value="X-ray"/>
    <property type="resolution" value="1.88 A"/>
    <property type="chains" value="C/F=39-46"/>
</dbReference>
<dbReference type="PDB" id="4Z77">
    <property type="method" value="X-ray"/>
    <property type="resolution" value="1.85 A"/>
    <property type="chains" value="C/F=39-47"/>
</dbReference>
<dbReference type="PDB" id="4Z78">
    <property type="method" value="X-ray"/>
    <property type="resolution" value="2.30 A"/>
    <property type="chains" value="C/F/I=39-48"/>
</dbReference>
<dbReference type="PDB" id="5AIY">
    <property type="method" value="NMR"/>
    <property type="chains" value="A/C/E/G/I/K=90-110, B/D/F/H/J/L=25-54"/>
</dbReference>
<dbReference type="PDB" id="5BOQ">
    <property type="method" value="X-ray"/>
    <property type="resolution" value="1.70 A"/>
    <property type="chains" value="A/C/E/G=90-110, B/D/F/H=25-54"/>
</dbReference>
<dbReference type="PDB" id="5BPO">
    <property type="method" value="X-ray"/>
    <property type="resolution" value="1.90 A"/>
    <property type="chains" value="A/C=90-110, B/D=25-54"/>
</dbReference>
<dbReference type="PDB" id="5BQQ">
    <property type="method" value="X-ray"/>
    <property type="resolution" value="1.54 A"/>
    <property type="chains" value="A/C/E/G/I/K=90-110, B/D/F/H/J/L=25-50"/>
</dbReference>
<dbReference type="PDB" id="5BTS">
    <property type="method" value="X-ray"/>
    <property type="resolution" value="1.77 A"/>
    <property type="chains" value="A=90-110, B=25-54"/>
</dbReference>
<dbReference type="PDB" id="5C0D">
    <property type="method" value="X-ray"/>
    <property type="resolution" value="1.68 A"/>
    <property type="chains" value="C=15-24"/>
</dbReference>
<dbReference type="PDB" id="5CJO">
    <property type="method" value="X-ray"/>
    <property type="resolution" value="3.29 A"/>
    <property type="chains" value="a=90-109"/>
</dbReference>
<dbReference type="PDB" id="5CNY">
    <property type="method" value="X-ray"/>
    <property type="resolution" value="1.70 A"/>
    <property type="chains" value="A/C=90-110, B/D=25-54"/>
</dbReference>
<dbReference type="PDB" id="5CO2">
    <property type="method" value="X-ray"/>
    <property type="resolution" value="1.70 A"/>
    <property type="chains" value="A/C=90-110, B/D=25-54"/>
</dbReference>
<dbReference type="PDB" id="5CO6">
    <property type="method" value="X-ray"/>
    <property type="resolution" value="1.80 A"/>
    <property type="chains" value="A/C=90-110, B/D=25-54"/>
</dbReference>
<dbReference type="PDB" id="5CO9">
    <property type="method" value="X-ray"/>
    <property type="resolution" value="1.92 A"/>
    <property type="chains" value="A/C=90-110, B/D=25-54"/>
</dbReference>
<dbReference type="PDB" id="5E7W">
    <property type="method" value="X-ray"/>
    <property type="resolution" value="0.95 A"/>
    <property type="chains" value="A/C=90-110, B/D=25-54"/>
</dbReference>
<dbReference type="PDB" id="5EMS">
    <property type="method" value="X-ray"/>
    <property type="resolution" value="2.30 A"/>
    <property type="chains" value="A/C/E/G/I/K=90-110, B/D/F/H/J/L=25-52"/>
</dbReference>
<dbReference type="PDB" id="5EN9">
    <property type="method" value="X-ray"/>
    <property type="resolution" value="1.50 A"/>
    <property type="chains" value="A=90-110, B=25-54"/>
</dbReference>
<dbReference type="PDB" id="5ENA">
    <property type="method" value="X-ray"/>
    <property type="resolution" value="1.35 A"/>
    <property type="chains" value="A=90-110, B=25-54"/>
</dbReference>
<dbReference type="PDB" id="5HPR">
    <property type="method" value="X-ray"/>
    <property type="resolution" value="1.33 A"/>
    <property type="chains" value="A=90-110, B=25-54"/>
</dbReference>
<dbReference type="PDB" id="5HPU">
    <property type="method" value="X-ray"/>
    <property type="resolution" value="2.20 A"/>
    <property type="chains" value="A/C=90-110, B/D=25-54"/>
</dbReference>
<dbReference type="PDB" id="5HQI">
    <property type="method" value="X-ray"/>
    <property type="resolution" value="0.97 A"/>
    <property type="chains" value="A=90-110, B=25-54"/>
</dbReference>
<dbReference type="PDB" id="5HRQ">
    <property type="method" value="X-ray"/>
    <property type="resolution" value="1.28 A"/>
    <property type="chains" value="A/C/E/G/I/K=90-110, B/D/F/H/J/L=25-54"/>
</dbReference>
<dbReference type="PDB" id="5HYJ">
    <property type="method" value="X-ray"/>
    <property type="resolution" value="3.06 A"/>
    <property type="chains" value="C/H=15-24"/>
</dbReference>
<dbReference type="PDB" id="5MAM">
    <property type="method" value="X-ray"/>
    <property type="resolution" value="2.20 A"/>
    <property type="chains" value="0/2/4/A/C/E/G/I/K/M/O/Q/S/U/W/Y=90-110, 1/3/5/B/D/F/H/J/L/N/P/R/T/V/X/Z=25-54"/>
</dbReference>
<dbReference type="PDB" id="5MHD">
    <property type="method" value="NMR"/>
    <property type="chains" value="A=90-110, B=25-55"/>
</dbReference>
<dbReference type="PDB" id="5MT3">
    <property type="method" value="X-ray"/>
    <property type="resolution" value="2.02 A"/>
    <property type="chains" value="A/C/E/G/I/K/M/O/Q/S/U/W/Y/a/c/e=90-110, B/D/F/H/J/L/N/P/R/T/V/X/Z/b/d/f=25-54"/>
</dbReference>
<dbReference type="PDB" id="5MT9">
    <property type="method" value="X-ray"/>
    <property type="resolution" value="1.88 A"/>
    <property type="chains" value="A/C/E/G/I/K/M/O/Q/S/U/W/Y/a/c/e=90-110, B/D/F/H/J/L/N/P/R/T/V/X/Z/b/d/f=25-54"/>
</dbReference>
<dbReference type="PDB" id="5MWQ">
    <property type="method" value="NMR"/>
    <property type="chains" value="A=90-110, B=25-56"/>
</dbReference>
<dbReference type="PDB" id="5T7R">
    <property type="method" value="X-ray"/>
    <property type="resolution" value="1.55 A"/>
    <property type="chains" value="A/C=90-110, B/D=25-54"/>
</dbReference>
<dbReference type="PDB" id="5UDP">
    <property type="method" value="X-ray"/>
    <property type="resolution" value="1.35 A"/>
    <property type="chains" value="A/C/E/G/I/K=90-110, B/D/F/H/J/L=25-54"/>
</dbReference>
<dbReference type="PDB" id="5UOZ">
    <property type="method" value="X-ray"/>
    <property type="resolution" value="1.17 A"/>
    <property type="chains" value="A=90-110, B=25-54"/>
</dbReference>
<dbReference type="PDB" id="5UQA">
    <property type="method" value="X-ray"/>
    <property type="resolution" value="1.31 A"/>
    <property type="chains" value="A/C/E/G/I/K=90-110, B/D/F/H/J/L=25-54"/>
</dbReference>
<dbReference type="PDB" id="5URT">
    <property type="method" value="X-ray"/>
    <property type="resolution" value="1.18 A"/>
    <property type="chains" value="A=90-110, B=25-54"/>
</dbReference>
<dbReference type="PDB" id="5URU">
    <property type="method" value="X-ray"/>
    <property type="resolution" value="2.41 A"/>
    <property type="chains" value="A/C/E/G=90-110, B/D/F/H=25-54"/>
</dbReference>
<dbReference type="PDB" id="5USP">
    <property type="method" value="X-ray"/>
    <property type="resolution" value="1.17 A"/>
    <property type="chains" value="A=90-110, B=25-54"/>
</dbReference>
<dbReference type="PDB" id="5USS">
    <property type="method" value="X-ray"/>
    <property type="resolution" value="2.06 A"/>
    <property type="chains" value="A/C=90-110, B/D=25-54"/>
</dbReference>
<dbReference type="PDB" id="5USV">
    <property type="method" value="X-ray"/>
    <property type="resolution" value="1.30 A"/>
    <property type="chains" value="A=90-110, B=25-54"/>
</dbReference>
<dbReference type="PDB" id="5UU2">
    <property type="method" value="X-ray"/>
    <property type="resolution" value="1.22 A"/>
    <property type="chains" value="A=90-110, B=25-54"/>
</dbReference>
<dbReference type="PDB" id="5UU3">
    <property type="method" value="X-ray"/>
    <property type="resolution" value="2.25 A"/>
    <property type="chains" value="A/C/E/G/I/K/M/O/Q/S/U/W=90-110, B/D/F/H/J/L/N/P/R/T/V/X=25-54"/>
</dbReference>
<dbReference type="PDB" id="5UU4">
    <property type="method" value="X-ray"/>
    <property type="resolution" value="1.97 A"/>
    <property type="chains" value="A/C=90-110, B/D=25-54"/>
</dbReference>
<dbReference type="PDB" id="5VIZ">
    <property type="method" value="X-ray"/>
    <property type="resolution" value="1.70 A"/>
    <property type="chains" value="A=90-109, B=25-53"/>
</dbReference>
<dbReference type="PDB" id="5WBT">
    <property type="method" value="NMR"/>
    <property type="chains" value="A=25-54, A=90-110"/>
</dbReference>
<dbReference type="PDB" id="5WDM">
    <property type="method" value="X-ray"/>
    <property type="resolution" value="2.80 A"/>
    <property type="chains" value="A/B/C/D/E/F=25-110"/>
</dbReference>
<dbReference type="PDB" id="5WOB">
    <property type="method" value="X-ray"/>
    <property type="resolution" value="3.95 A"/>
    <property type="chains" value="a/b/c/d/e/f/g/h=90-109"/>
</dbReference>
<dbReference type="PDB" id="6B3Q">
    <property type="method" value="EM"/>
    <property type="resolution" value="3.70 A"/>
    <property type="chains" value="a/b=1-110"/>
</dbReference>
<dbReference type="PDB" id="6B70">
    <property type="method" value="EM"/>
    <property type="resolution" value="3.70 A"/>
    <property type="chains" value="a/c=1-110"/>
</dbReference>
<dbReference type="PDB" id="6BFC">
    <property type="method" value="EM"/>
    <property type="resolution" value="3.70 A"/>
    <property type="chains" value="a/b=1-110"/>
</dbReference>
<dbReference type="PDB" id="6CE7">
    <property type="method" value="EM"/>
    <property type="resolution" value="7.40 A"/>
    <property type="chains" value="N=90-110"/>
</dbReference>
<dbReference type="PDB" id="6CE9">
    <property type="method" value="EM"/>
    <property type="resolution" value="4.30 A"/>
    <property type="chains" value="K/N=90-110"/>
</dbReference>
<dbReference type="PDB" id="6CEB">
    <property type="method" value="EM"/>
    <property type="resolution" value="4.70 A"/>
    <property type="chains" value="K/N=90-110"/>
</dbReference>
<dbReference type="PDB" id="6CK2">
    <property type="method" value="X-ray"/>
    <property type="resolution" value="2.25 A"/>
    <property type="chains" value="A/C=90-110, B/D=25-54"/>
</dbReference>
<dbReference type="PDB" id="6GNQ">
    <property type="method" value="X-ray"/>
    <property type="resolution" value="2.20 A"/>
    <property type="chains" value="A/C/E/G/I/K/M/O/Q/S/U/W=90-110, B/D/F/H/J/L/N/P/R/T/V/X=25-54"/>
</dbReference>
<dbReference type="PDB" id="6GV0">
    <property type="method" value="X-ray"/>
    <property type="resolution" value="1.26 A"/>
    <property type="chains" value="B/D=25-54, G/I=90-110"/>
</dbReference>
<dbReference type="PDB" id="6H3M">
    <property type="method" value="X-ray"/>
    <property type="resolution" value="1.82 A"/>
    <property type="chains" value="A/C/E/G/I/K/N/R=90-110, B/D/F/H/J/L/P/Q=25-54"/>
</dbReference>
<dbReference type="PDB" id="6HN5">
    <property type="method" value="EM"/>
    <property type="resolution" value="3.20 A"/>
    <property type="chains" value="A=90-110, B=25-54"/>
</dbReference>
<dbReference type="PDB" id="6JK8">
    <property type="method" value="EM"/>
    <property type="resolution" value="4.70 A"/>
    <property type="chains" value="C/D=1-110"/>
</dbReference>
<dbReference type="PDB" id="6JR3">
    <property type="method" value="EM"/>
    <property type="resolution" value="14.50 A"/>
    <property type="chains" value="A/C/E/G/I/K=90-110, B/D/F/H/J/L=25-54"/>
</dbReference>
<dbReference type="PDB" id="6K59">
    <property type="method" value="NMR"/>
    <property type="chains" value="A=90-109, B=25-56"/>
</dbReference>
<dbReference type="PDB" id="6NWV">
    <property type="method" value="X-ray"/>
    <property type="resolution" value="1.60 A"/>
    <property type="chains" value="A/C/E/G/I/K=90-110, B/D/F/H/J/L=25-54"/>
</dbReference>
<dbReference type="PDB" id="6O17">
    <property type="method" value="X-ray"/>
    <property type="resolution" value="1.58 A"/>
    <property type="chains" value="A=90-110, B=25-53"/>
</dbReference>
<dbReference type="PDB" id="6P4Z">
    <property type="method" value="X-ray"/>
    <property type="resolution" value="1.80 A"/>
    <property type="chains" value="A/C=90-110, B/D=25-54"/>
</dbReference>
<dbReference type="PDB" id="6S34">
    <property type="method" value="X-ray"/>
    <property type="resolution" value="1.35 A"/>
    <property type="chains" value="A=90-110, B=25-54"/>
</dbReference>
<dbReference type="PDB" id="6S4I">
    <property type="method" value="X-ray"/>
    <property type="resolution" value="1.51 A"/>
    <property type="chains" value="A=90-110, B=25-53"/>
</dbReference>
<dbReference type="PDB" id="6S4J">
    <property type="method" value="X-ray"/>
    <property type="resolution" value="1.50 A"/>
    <property type="chains" value="A=90-110, B=25-53"/>
</dbReference>
<dbReference type="PDB" id="6SOF">
    <property type="method" value="EM"/>
    <property type="resolution" value="4.30 A"/>
    <property type="chains" value="E/G/I/K=90-110, F/H/J/L=25-54"/>
</dbReference>
<dbReference type="PDB" id="6TC2">
    <property type="method" value="X-ray"/>
    <property type="resolution" value="1.36 A"/>
    <property type="chains" value="A/B/C/D/E/F/G/H/I/J/K/L=1-110"/>
</dbReference>
<dbReference type="PDB" id="6TYH">
    <property type="method" value="X-ray"/>
    <property type="resolution" value="1.60 A"/>
    <property type="chains" value="A/C/E/G/I/K=90-110, B/D/F/H/J/L=25-54"/>
</dbReference>
<dbReference type="PDB" id="6U46">
    <property type="method" value="NMR"/>
    <property type="chains" value="A=25-109"/>
</dbReference>
<dbReference type="PDB" id="6VEP">
    <property type="method" value="X-ray"/>
    <property type="resolution" value="2.90 A"/>
    <property type="chains" value="A/G/M/S=90-110, B/H/N/T=25-54"/>
</dbReference>
<dbReference type="PDB" id="6VER">
    <property type="method" value="X-ray"/>
    <property type="resolution" value="1.05 A"/>
    <property type="chains" value="A=90-110, B=25-46"/>
</dbReference>
<dbReference type="PDB" id="6VES">
    <property type="method" value="X-ray"/>
    <property type="resolution" value="1.85 A"/>
    <property type="chains" value="A=90-110, B=25-46"/>
</dbReference>
<dbReference type="PDB" id="6VET">
    <property type="method" value="X-ray"/>
    <property type="resolution" value="1.46 A"/>
    <property type="chains" value="A/C/E=90-110, B/D/F=25-46"/>
</dbReference>
<dbReference type="PDB" id="6X4X">
    <property type="method" value="NMR"/>
    <property type="chains" value="A=90-110, B=25-54"/>
</dbReference>
<dbReference type="PDB" id="6Z7W">
    <property type="method" value="X-ray"/>
    <property type="resolution" value="2.42 A"/>
    <property type="chains" value="I/K/M/O=90-110, J/L/N/P=25-54"/>
</dbReference>
<dbReference type="PDB" id="6Z7Y">
    <property type="method" value="X-ray"/>
    <property type="resolution" value="2.20 A"/>
    <property type="chains" value="E/G=90-110, F/H=25-54"/>
</dbReference>
<dbReference type="PDB" id="7BW7">
    <property type="method" value="EM"/>
    <property type="resolution" value="4.10 A"/>
    <property type="chains" value="D=25-110"/>
</dbReference>
<dbReference type="PDB" id="7BW8">
    <property type="method" value="EM"/>
    <property type="resolution" value="3.80 A"/>
    <property type="chains" value="D=25-110"/>
</dbReference>
<dbReference type="PDB" id="7BWA">
    <property type="method" value="EM"/>
    <property type="resolution" value="4.90 A"/>
    <property type="chains" value="D/E=25-110"/>
</dbReference>
<dbReference type="PDB" id="7JP3">
    <property type="method" value="X-ray"/>
    <property type="resolution" value="1.95 A"/>
    <property type="chains" value="A/B/C/D/E/F=25-110"/>
</dbReference>
<dbReference type="PDB" id="7KD6">
    <property type="method" value="X-ray"/>
    <property type="resolution" value="2.60 A"/>
    <property type="chains" value="B/H/N/T=25-110"/>
</dbReference>
<dbReference type="PDB" id="7MD4">
    <property type="method" value="EM"/>
    <property type="resolution" value="4.50 A"/>
    <property type="chains" value="O/Q/S/U=90-110, P/R/T/V=25-54"/>
</dbReference>
<dbReference type="PDB" id="7MD5">
    <property type="method" value="EM"/>
    <property type="resolution" value="5.20 A"/>
    <property type="chains" value="O/Q/S/U=90-110, P/R/T/V=25-54"/>
</dbReference>
<dbReference type="PDB" id="7MQO">
    <property type="method" value="EM"/>
    <property type="resolution" value="3.40 A"/>
    <property type="chains" value="A/C=90-110, B/D=25-46"/>
</dbReference>
<dbReference type="PDB" id="7MQR">
    <property type="method" value="EM"/>
    <property type="resolution" value="4.10 A"/>
    <property type="chains" value="A/C/G/I=90-110, B/D/H/J=25-46"/>
</dbReference>
<dbReference type="PDB" id="7MQS">
    <property type="method" value="EM"/>
    <property type="resolution" value="4.40 A"/>
    <property type="chains" value="A/C/G=90-110, B/D/H=25-46"/>
</dbReference>
<dbReference type="PDB" id="7NHU">
    <property type="method" value="X-ray"/>
    <property type="resolution" value="1.40 A"/>
    <property type="chains" value="A=90-110, B=25-53"/>
</dbReference>
<dbReference type="PDB" id="7NMG">
    <property type="method" value="X-ray"/>
    <property type="resolution" value="2.48 A"/>
    <property type="chains" value="C=3-11"/>
</dbReference>
<dbReference type="PDB" id="7PG0">
    <property type="method" value="EM"/>
    <property type="resolution" value="7.60 A"/>
    <property type="chains" value="C/E/I=90-110, D/F/J=25-54"/>
</dbReference>
<dbReference type="PDB" id="7PG2">
    <property type="method" value="EM"/>
    <property type="resolution" value="6.70 A"/>
    <property type="chains" value="C/E/I=90-110, D/F/J=25-54"/>
</dbReference>
<dbReference type="PDB" id="7PG3">
    <property type="method" value="EM"/>
    <property type="resolution" value="7.30 A"/>
    <property type="chains" value="C/E/I=90-110, D/F/J=25-54"/>
</dbReference>
<dbReference type="PDB" id="7PG4">
    <property type="method" value="EM"/>
    <property type="resolution" value="9.10 A"/>
    <property type="chains" value="C/I=90-110, D/J=25-54"/>
</dbReference>
<dbReference type="PDB" id="7QAC">
    <property type="method" value="X-ray"/>
    <property type="resolution" value="2.29 A"/>
    <property type="chains" value="A=90-110, B=25-54"/>
</dbReference>
<dbReference type="PDB" id="7QGF">
    <property type="method" value="X-ray"/>
    <property type="resolution" value="1.20 A"/>
    <property type="chains" value="AAA=90-110, BBB=25-53"/>
</dbReference>
<dbReference type="PDB" id="7QID">
    <property type="method" value="EM"/>
    <property type="resolution" value="5.00 A"/>
    <property type="chains" value="E/I/K=90-110, F/J/L=25-54"/>
</dbReference>
<dbReference type="PDB" id="7RKD">
    <property type="method" value="X-ray"/>
    <property type="resolution" value="1.25 A"/>
    <property type="chains" value="A/C=90-110, B/D=25-54"/>
</dbReference>
<dbReference type="PDB" id="7RZE">
    <property type="method" value="EM"/>
    <property type="resolution" value="3.30 A"/>
    <property type="chains" value="a=90-110, b=25-54"/>
</dbReference>
<dbReference type="PDB" id="7RZF">
    <property type="method" value="EM"/>
    <property type="resolution" value="3.40 A"/>
    <property type="chains" value="a=90-110, b=25-54"/>
</dbReference>
<dbReference type="PDB" id="7RZI">
    <property type="method" value="EM"/>
    <property type="resolution" value="3.00 A"/>
    <property type="chains" value="a/c=90-110, b/d=25-54"/>
</dbReference>
<dbReference type="PDB" id="7S4Y">
    <property type="method" value="X-ray"/>
    <property type="resolution" value="1.71 A"/>
    <property type="chains" value="A/C=90-110, B/D=25-54"/>
</dbReference>
<dbReference type="PDB" id="7SL1">
    <property type="method" value="EM"/>
    <property type="resolution" value="3.40 A"/>
    <property type="chains" value="C/D=25-54, E/F=90-110"/>
</dbReference>
<dbReference type="PDB" id="7SL2">
    <property type="method" value="EM"/>
    <property type="resolution" value="3.60 A"/>
    <property type="chains" value="C/D/E/F=25-54, G/H/I/J=90-110"/>
</dbReference>
<dbReference type="PDB" id="7SL3">
    <property type="method" value="EM"/>
    <property type="resolution" value="3.40 A"/>
    <property type="chains" value="C/D=25-54, E/F=90-110"/>
</dbReference>
<dbReference type="PDB" id="7SL4">
    <property type="method" value="EM"/>
    <property type="resolution" value="5.00 A"/>
    <property type="chains" value="C/D=25-54, E/F=90-110"/>
</dbReference>
<dbReference type="PDB" id="7SL6">
    <property type="method" value="EM"/>
    <property type="resolution" value="3.70 A"/>
    <property type="chains" value="C/D=90-110, E/F=25-54"/>
</dbReference>
<dbReference type="PDB" id="7SL7">
    <property type="method" value="EM"/>
    <property type="resolution" value="3.10 A"/>
    <property type="chains" value="C/D/E/F=90-110, G/H/I/J=25-54"/>
</dbReference>
<dbReference type="PDB" id="7STH">
    <property type="method" value="EM"/>
    <property type="resolution" value="3.50 A"/>
    <property type="chains" value="C/D=1-110"/>
</dbReference>
<dbReference type="PDB" id="7STI">
    <property type="method" value="EM"/>
    <property type="resolution" value="4.90 A"/>
    <property type="chains" value="C=1-110"/>
</dbReference>
<dbReference type="PDB" id="7STJ">
    <property type="method" value="EM"/>
    <property type="resolution" value="4.40 A"/>
    <property type="chains" value="C/D=1-110"/>
</dbReference>
<dbReference type="PDB" id="7STK">
    <property type="method" value="EM"/>
    <property type="resolution" value="4.00 A"/>
    <property type="chains" value="C/D=1-110"/>
</dbReference>
<dbReference type="PDB" id="7U6E">
    <property type="method" value="EM"/>
    <property type="resolution" value="3.00 A"/>
    <property type="chains" value="A=90-110, B=25-54"/>
</dbReference>
<dbReference type="PDB" id="7V3P">
    <property type="method" value="EM"/>
    <property type="resolution" value="3.60 A"/>
    <property type="chains" value="E=90-110, F=25-54"/>
</dbReference>
<dbReference type="PDB" id="7YQ3">
    <property type="method" value="EM"/>
    <property type="resolution" value="3.60 A"/>
    <property type="chains" value="A=90-110"/>
</dbReference>
<dbReference type="PDB" id="7YQ4">
    <property type="method" value="EM"/>
    <property type="resolution" value="3.95 A"/>
    <property type="chains" value="A=90-110"/>
</dbReference>
<dbReference type="PDB" id="7YQ5">
    <property type="method" value="EM"/>
    <property type="resolution" value="4.27 A"/>
    <property type="chains" value="A=90-110"/>
</dbReference>
<dbReference type="PDB" id="7Z5L">
    <property type="method" value="X-ray"/>
    <property type="resolution" value="1.40 A"/>
    <property type="chains" value="A=90-110, B=25-54"/>
</dbReference>
<dbReference type="PDB" id="7Z5Q">
    <property type="method" value="X-ray"/>
    <property type="resolution" value="1.80 A"/>
    <property type="chains" value="A=90-110, B=25-54"/>
</dbReference>
<dbReference type="PDB" id="8EYX">
    <property type="method" value="EM"/>
    <property type="resolution" value="4.50 A"/>
    <property type="chains" value="D/E/F/G=1-110"/>
</dbReference>
<dbReference type="PDB" id="8EYY">
    <property type="method" value="EM"/>
    <property type="resolution" value="4.90 A"/>
    <property type="chains" value="C/D/E/F=1-110"/>
</dbReference>
<dbReference type="PDB" id="8EZ0">
    <property type="method" value="EM"/>
    <property type="resolution" value="3.70 A"/>
    <property type="chains" value="D/E/F/G=1-110"/>
</dbReference>
<dbReference type="PDB" id="8GSG">
    <property type="method" value="X-ray"/>
    <property type="resolution" value="2.05 A"/>
    <property type="chains" value="A/C=90-110, B/D=25-54"/>
</dbReference>
<dbReference type="PDB" id="8GUY">
    <property type="method" value="EM"/>
    <property type="resolution" value="4.18 A"/>
    <property type="chains" value="A/C=90-110"/>
</dbReference>
<dbReference type="PDB" id="8HGZ">
    <property type="method" value="X-ray"/>
    <property type="resolution" value="1.70 A"/>
    <property type="chains" value="A/E/I/M=90-110, B/F/J/N=25-53"/>
</dbReference>
<dbReference type="PDB" id="8HSF">
    <property type="method" value="X-ray"/>
    <property type="resolution" value="2.90 A"/>
    <property type="chains" value="A/C=90-110, B/D=25-54"/>
</dbReference>
<dbReference type="PDB" id="8HSK">
    <property type="method" value="X-ray"/>
    <property type="resolution" value="1.64 A"/>
    <property type="chains" value="A=90-110, B=25-53"/>
</dbReference>
<dbReference type="PDB" id="8IPZ">
    <property type="method" value="X-ray"/>
    <property type="resolution" value="1.40 A"/>
    <property type="chains" value="A/C/E/G=90-110, B/D/F/H=25-53"/>
</dbReference>
<dbReference type="PDB" id="8OKY">
    <property type="method" value="X-ray"/>
    <property type="resolution" value="1.17 A"/>
    <property type="chains" value="A=90-110, B=25-50"/>
</dbReference>
<dbReference type="PDB" id="8ONI">
    <property type="method" value="X-ray"/>
    <property type="resolution" value="2.30 A"/>
    <property type="chains" value="A/I=90-110, B/F=25-54"/>
</dbReference>
<dbReference type="PDB" id="8ONK">
    <property type="method" value="X-ray"/>
    <property type="resolution" value="3.40 A"/>
    <property type="chains" value="A/B=25-54, D/I=90-110"/>
</dbReference>
<dbReference type="PDB" id="8ONP">
    <property type="method" value="X-ray"/>
    <property type="resolution" value="1.77 A"/>
    <property type="chains" value="A=90-110, B=25-50"/>
</dbReference>
<dbReference type="PDB" id="8ONR">
    <property type="method" value="X-ray"/>
    <property type="resolution" value="1.88 A"/>
    <property type="chains" value="A=90-110, B=25-50"/>
</dbReference>
<dbReference type="PDB" id="8PI4">
    <property type="method" value="X-ray"/>
    <property type="resolution" value="1.25 A"/>
    <property type="chains" value="A=25-53, A=90-110"/>
</dbReference>
<dbReference type="PDB" id="8PI5">
    <property type="method" value="X-ray"/>
    <property type="resolution" value="1.66 A"/>
    <property type="chains" value="B/D=25-53, B/D=90-110"/>
</dbReference>
<dbReference type="PDB" id="8PI6">
    <property type="method" value="X-ray"/>
    <property type="resolution" value="2.14 A"/>
    <property type="chains" value="A/B/C/D/E=25-53, A/B/C/D/E=90-110"/>
</dbReference>
<dbReference type="PDB" id="8PJH">
    <property type="method" value="X-ray"/>
    <property type="resolution" value="1.50 A"/>
    <property type="chains" value="A=25-53, A=81-110"/>
</dbReference>
<dbReference type="PDB" id="8RRP">
    <property type="method" value="X-ray"/>
    <property type="resolution" value="2.00 A"/>
    <property type="chains" value="A/C/E=90-110, B/D/F=25-53"/>
</dbReference>
<dbReference type="PDB" id="8RVT">
    <property type="method" value="NMR"/>
    <property type="chains" value="A/C/E/G/I=90-110, B/D/F/H/J=25-54"/>
</dbReference>
<dbReference type="PDB" id="8SBD">
    <property type="method" value="EM"/>
    <property type="resolution" value="3.20 A"/>
    <property type="chains" value="A/B/C/D/E/F/G/H/I/J/K/L/M/N/O/P=90-110, a/b/c/d/e/f/g/h/i/j/k/l/m/n/o/p=25-54"/>
</dbReference>
<dbReference type="PDB" id="8VCX">
    <property type="method" value="X-ray"/>
    <property type="resolution" value="2.59 A"/>
    <property type="chains" value="C=64-78"/>
</dbReference>
<dbReference type="PDB" id="8VDD">
    <property type="method" value="X-ray"/>
    <property type="resolution" value="2.60 A"/>
    <property type="chains" value="C=64-78"/>
</dbReference>
<dbReference type="PDB" id="8WU0">
    <property type="method" value="X-ray"/>
    <property type="resolution" value="1.95 A"/>
    <property type="chains" value="A/C=90-109, B/D=25-56"/>
</dbReference>
<dbReference type="PDB" id="8Z4B">
    <property type="method" value="X-ray"/>
    <property type="resolution" value="2.50 A"/>
    <property type="chains" value="A/C=90-110, B/D=25-54"/>
</dbReference>
<dbReference type="PDB" id="9LVC">
    <property type="method" value="X-ray"/>
    <property type="resolution" value="2.30 A"/>
    <property type="chains" value="A/C/E/G=90-110, B/D/F/H=25-53"/>
</dbReference>
<dbReference type="PDB" id="9LVD">
    <property type="method" value="X-ray"/>
    <property type="resolution" value="2.85 A"/>
    <property type="chains" value="A/C=90-110, B/D=25-53"/>
</dbReference>
<dbReference type="PDB" id="9LVE">
    <property type="method" value="X-ray"/>
    <property type="resolution" value="2.88 A"/>
    <property type="chains" value="A/C=90-110, B/D=25-53"/>
</dbReference>
<dbReference type="PDB" id="9LVX">
    <property type="method" value="X-ray"/>
    <property type="resolution" value="2.70 A"/>
    <property type="chains" value="A/C/E/G=90-110, B/D/F/H=25-53"/>
</dbReference>
<dbReference type="PDB" id="9LVY">
    <property type="method" value="X-ray"/>
    <property type="resolution" value="2.85 A"/>
    <property type="chains" value="A/C=90-110, B/D=25-53"/>
</dbReference>
<dbReference type="PDB" id="9M4X">
    <property type="method" value="X-ray"/>
    <property type="resolution" value="1.40 A"/>
    <property type="chains" value="A=90-109, B=25-53"/>
</dbReference>
<dbReference type="PDB" id="9M4Y">
    <property type="method" value="X-ray"/>
    <property type="resolution" value="1.40 A"/>
    <property type="chains" value="A=90-109, B=25-53"/>
</dbReference>
<dbReference type="PDB" id="9M4Z">
    <property type="method" value="X-ray"/>
    <property type="resolution" value="1.50 A"/>
    <property type="chains" value="A=90-109, B=25-53"/>
</dbReference>
<dbReference type="PDB" id="9M50">
    <property type="method" value="X-ray"/>
    <property type="resolution" value="1.40 A"/>
    <property type="chains" value="A=90-109, B=25-53"/>
</dbReference>
<dbReference type="PDB" id="9M51">
    <property type="method" value="X-ray"/>
    <property type="resolution" value="1.76 A"/>
    <property type="chains" value="A=90-109, B=25-53"/>
</dbReference>
<dbReference type="PDBsum" id="1A7F"/>
<dbReference type="PDBsum" id="1AI0"/>
<dbReference type="PDBsum" id="1AIY"/>
<dbReference type="PDBsum" id="1B9E"/>
<dbReference type="PDBsum" id="1BEN"/>
<dbReference type="PDBsum" id="1EFE"/>
<dbReference type="PDBsum" id="1EV3"/>
<dbReference type="PDBsum" id="1EV6"/>
<dbReference type="PDBsum" id="1EVR"/>
<dbReference type="PDBsum" id="1FU2"/>
<dbReference type="PDBsum" id="1FUB"/>
<dbReference type="PDBsum" id="1G7A"/>
<dbReference type="PDBsum" id="1G7B"/>
<dbReference type="PDBsum" id="1GUJ"/>
<dbReference type="PDBsum" id="1HIQ"/>
<dbReference type="PDBsum" id="1HIS"/>
<dbReference type="PDBsum" id="1HIT"/>
<dbReference type="PDBsum" id="1HLS"/>
<dbReference type="PDBsum" id="1HTV"/>
<dbReference type="PDBsum" id="1HUI"/>
<dbReference type="PDBsum" id="1IOG"/>
<dbReference type="PDBsum" id="1IOH"/>
<dbReference type="PDBsum" id="1J73"/>
<dbReference type="PDBsum" id="1JCA"/>
<dbReference type="PDBsum" id="1JCO"/>
<dbReference type="PDBsum" id="1JK8"/>
<dbReference type="PDBsum" id="1K3M"/>
<dbReference type="PDBsum" id="1KMF"/>
<dbReference type="PDBsum" id="1LKQ"/>
<dbReference type="PDBsum" id="1LPH"/>
<dbReference type="PDBsum" id="1MHI"/>
<dbReference type="PDBsum" id="1MHJ"/>
<dbReference type="PDBsum" id="1MSO"/>
<dbReference type="PDBsum" id="1OS3"/>
<dbReference type="PDBsum" id="1OS4"/>
<dbReference type="PDBsum" id="1Q4V"/>
<dbReference type="PDBsum" id="1QIY"/>
<dbReference type="PDBsum" id="1QIZ"/>
<dbReference type="PDBsum" id="1QJ0"/>
<dbReference type="PDBsum" id="1RWE"/>
<dbReference type="PDBsum" id="1SF1"/>
<dbReference type="PDBsum" id="1SJT"/>
<dbReference type="PDBsum" id="1SJU"/>
<dbReference type="PDBsum" id="1T0C"/>
<dbReference type="PDBsum" id="1T1K"/>
<dbReference type="PDBsum" id="1T1P"/>
<dbReference type="PDBsum" id="1T1Q"/>
<dbReference type="PDBsum" id="1TRZ"/>
<dbReference type="PDBsum" id="1TYL"/>
<dbReference type="PDBsum" id="1TYM"/>
<dbReference type="PDBsum" id="1UZ9"/>
<dbReference type="PDBsum" id="1VKT"/>
<dbReference type="PDBsum" id="1W8P"/>
<dbReference type="PDBsum" id="1XDA"/>
<dbReference type="PDBsum" id="1XGL"/>
<dbReference type="PDBsum" id="1XW7"/>
<dbReference type="PDBsum" id="1ZEG"/>
<dbReference type="PDBsum" id="1ZEH"/>
<dbReference type="PDBsum" id="1ZNJ"/>
<dbReference type="PDBsum" id="2AIY"/>
<dbReference type="PDBsum" id="2C8Q"/>
<dbReference type="PDBsum" id="2C8R"/>
<dbReference type="PDBsum" id="2CEU"/>
<dbReference type="PDBsum" id="2G54"/>
<dbReference type="PDBsum" id="2G56"/>
<dbReference type="PDBsum" id="2H67"/>
<dbReference type="PDBsum" id="2HH4"/>
<dbReference type="PDBsum" id="2HHO"/>
<dbReference type="PDBsum" id="2HIU"/>
<dbReference type="PDBsum" id="2JMN"/>
<dbReference type="PDBsum" id="2JUM"/>
<dbReference type="PDBsum" id="2JUU"/>
<dbReference type="PDBsum" id="2JUV"/>
<dbReference type="PDBsum" id="2JV1"/>
<dbReference type="PDBsum" id="2JZQ"/>
<dbReference type="PDBsum" id="2K91"/>
<dbReference type="PDBsum" id="2K9R"/>
<dbReference type="PDBsum" id="2KJJ"/>
<dbReference type="PDBsum" id="2KJU"/>
<dbReference type="PDBsum" id="2KQP"/>
<dbReference type="PDBsum" id="2KQQ"/>
<dbReference type="PDBsum" id="2KXK"/>
<dbReference type="PDBsum" id="2L1Y"/>
<dbReference type="PDBsum" id="2L1Z"/>
<dbReference type="PDBsum" id="2LGB"/>
<dbReference type="PDBsum" id="2LWZ"/>
<dbReference type="PDBsum" id="2M1D"/>
<dbReference type="PDBsum" id="2M1E"/>
<dbReference type="PDBsum" id="2M2M"/>
<dbReference type="PDBsum" id="2M2N"/>
<dbReference type="PDBsum" id="2M2O"/>
<dbReference type="PDBsum" id="2M2P"/>
<dbReference type="PDBsum" id="2MLI"/>
<dbReference type="PDBsum" id="2MPG"/>
<dbReference type="PDBsum" id="2MPI"/>
<dbReference type="PDBsum" id="2MVC"/>
<dbReference type="PDBsum" id="2MVD"/>
<dbReference type="PDBsum" id="2N2V"/>
<dbReference type="PDBsum" id="2N2W"/>
<dbReference type="PDBsum" id="2N2X"/>
<dbReference type="PDBsum" id="2OLY"/>
<dbReference type="PDBsum" id="2OLZ"/>
<dbReference type="PDBsum" id="2OM0"/>
<dbReference type="PDBsum" id="2OM1"/>
<dbReference type="PDBsum" id="2OMG"/>
<dbReference type="PDBsum" id="2OMH"/>
<dbReference type="PDBsum" id="2OMI"/>
<dbReference type="PDBsum" id="2OMQ"/>
<dbReference type="PDBsum" id="2QIU"/>
<dbReference type="PDBsum" id="2R34"/>
<dbReference type="PDBsum" id="2R35"/>
<dbReference type="PDBsum" id="2R36"/>
<dbReference type="PDBsum" id="2RN5"/>
<dbReference type="PDBsum" id="2VJZ"/>
<dbReference type="PDBsum" id="2VK0"/>
<dbReference type="PDBsum" id="2W44"/>
<dbReference type="PDBsum" id="2WBY"/>
<dbReference type="PDBsum" id="2WC0"/>
<dbReference type="PDBsum" id="2WRU"/>
<dbReference type="PDBsum" id="2WRV"/>
<dbReference type="PDBsum" id="2WRW"/>
<dbReference type="PDBsum" id="2WRX"/>
<dbReference type="PDBsum" id="2WS0"/>
<dbReference type="PDBsum" id="2WS1"/>
<dbReference type="PDBsum" id="2WS4"/>
<dbReference type="PDBsum" id="2WS6"/>
<dbReference type="PDBsum" id="2WS7"/>
<dbReference type="PDBsum" id="3AIY"/>
<dbReference type="PDBsum" id="3BXQ"/>
<dbReference type="PDBsum" id="3E7Y"/>
<dbReference type="PDBsum" id="3E7Z"/>
<dbReference type="PDBsum" id="3EXX"/>
<dbReference type="PDBsum" id="3FQ9"/>
<dbReference type="PDBsum" id="3HYD"/>
<dbReference type="PDBsum" id="3I3Z"/>
<dbReference type="PDBsum" id="3I40"/>
<dbReference type="PDBsum" id="3ILG"/>
<dbReference type="PDBsum" id="3INC"/>
<dbReference type="PDBsum" id="3IR0"/>
<dbReference type="PDBsum" id="3JSD"/>
<dbReference type="PDBsum" id="3KQ6"/>
<dbReference type="PDBsum" id="3P2X"/>
<dbReference type="PDBsum" id="3P33"/>
<dbReference type="PDBsum" id="3Q6E"/>
<dbReference type="PDBsum" id="3ROV"/>
<dbReference type="PDBsum" id="3TT8"/>
<dbReference type="PDBsum" id="3U4N"/>
<dbReference type="PDBsum" id="3UTQ"/>
<dbReference type="PDBsum" id="3UTS"/>
<dbReference type="PDBsum" id="3UTT"/>
<dbReference type="PDBsum" id="3V19"/>
<dbReference type="PDBsum" id="3V1G"/>
<dbReference type="PDBsum" id="3W11"/>
<dbReference type="PDBsum" id="3W12"/>
<dbReference type="PDBsum" id="3W13"/>
<dbReference type="PDBsum" id="3W7Y"/>
<dbReference type="PDBsum" id="3W7Z"/>
<dbReference type="PDBsum" id="3W80"/>
<dbReference type="PDBsum" id="3ZI3"/>
<dbReference type="PDBsum" id="3ZQR"/>
<dbReference type="PDBsum" id="3ZS2"/>
<dbReference type="PDBsum" id="3ZU1"/>
<dbReference type="PDBsum" id="4AIY"/>
<dbReference type="PDBsum" id="4AJX"/>
<dbReference type="PDBsum" id="4AJZ"/>
<dbReference type="PDBsum" id="4AK0"/>
<dbReference type="PDBsum" id="4AKJ"/>
<dbReference type="PDBsum" id="4CXL"/>
<dbReference type="PDBsum" id="4CXN"/>
<dbReference type="PDBsum" id="4CY7"/>
<dbReference type="PDBsum" id="4EFX"/>
<dbReference type="PDBsum" id="4EWW"/>
<dbReference type="PDBsum" id="4EWX"/>
<dbReference type="PDBsum" id="4EWZ"/>
<dbReference type="PDBsum" id="4EX0"/>
<dbReference type="PDBsum" id="4EX1"/>
<dbReference type="PDBsum" id="4EXX"/>
<dbReference type="PDBsum" id="4EY1"/>
<dbReference type="PDBsum" id="4EY9"/>
<dbReference type="PDBsum" id="4EYD"/>
<dbReference type="PDBsum" id="4EYN"/>
<dbReference type="PDBsum" id="4EYP"/>
<dbReference type="PDBsum" id="4F0N"/>
<dbReference type="PDBsum" id="4F0O"/>
<dbReference type="PDBsum" id="4F1A"/>
<dbReference type="PDBsum" id="4F1B"/>
<dbReference type="PDBsum" id="4F1C"/>
<dbReference type="PDBsum" id="4F1D"/>
<dbReference type="PDBsum" id="4F1F"/>
<dbReference type="PDBsum" id="4F1G"/>
<dbReference type="PDBsum" id="4F4T"/>
<dbReference type="PDBsum" id="4F4V"/>
<dbReference type="PDBsum" id="4F51"/>
<dbReference type="PDBsum" id="4F8F"/>
<dbReference type="PDBsum" id="4FG3"/>
<dbReference type="PDBsum" id="4FKA"/>
<dbReference type="PDBsum" id="4GBC"/>
<dbReference type="PDBsum" id="4GBI"/>
<dbReference type="PDBsum" id="4GBK"/>
<dbReference type="PDBsum" id="4GBL"/>
<dbReference type="PDBsum" id="4GBN"/>
<dbReference type="PDBsum" id="4IUZ"/>
<dbReference type="PDBsum" id="4IYD"/>
<dbReference type="PDBsum" id="4IYF"/>
<dbReference type="PDBsum" id="4NIB"/>
<dbReference type="PDBsum" id="4OGA"/>
<dbReference type="PDBsum" id="4P65"/>
<dbReference type="PDBsum" id="4RXW"/>
<dbReference type="PDBsum" id="4UNE"/>
<dbReference type="PDBsum" id="4UNG"/>
<dbReference type="PDBsum" id="4UNH"/>
<dbReference type="PDBsum" id="4WDI"/>
<dbReference type="PDBsum" id="4XC4"/>
<dbReference type="PDBsum" id="4Y19"/>
<dbReference type="PDBsum" id="4Y1A"/>
<dbReference type="PDBsum" id="4Z76"/>
<dbReference type="PDBsum" id="4Z77"/>
<dbReference type="PDBsum" id="4Z78"/>
<dbReference type="PDBsum" id="5AIY"/>
<dbReference type="PDBsum" id="5BOQ"/>
<dbReference type="PDBsum" id="5BPO"/>
<dbReference type="PDBsum" id="5BQQ"/>
<dbReference type="PDBsum" id="5BTS"/>
<dbReference type="PDBsum" id="5C0D"/>
<dbReference type="PDBsum" id="5CJO"/>
<dbReference type="PDBsum" id="5CNY"/>
<dbReference type="PDBsum" id="5CO2"/>
<dbReference type="PDBsum" id="5CO6"/>
<dbReference type="PDBsum" id="5CO9"/>
<dbReference type="PDBsum" id="5E7W"/>
<dbReference type="PDBsum" id="5EMS"/>
<dbReference type="PDBsum" id="5EN9"/>
<dbReference type="PDBsum" id="5ENA"/>
<dbReference type="PDBsum" id="5HPR"/>
<dbReference type="PDBsum" id="5HPU"/>
<dbReference type="PDBsum" id="5HQI"/>
<dbReference type="PDBsum" id="5HRQ"/>
<dbReference type="PDBsum" id="5HYJ"/>
<dbReference type="PDBsum" id="5MAM"/>
<dbReference type="PDBsum" id="5MHD"/>
<dbReference type="PDBsum" id="5MT3"/>
<dbReference type="PDBsum" id="5MT9"/>
<dbReference type="PDBsum" id="5MWQ"/>
<dbReference type="PDBsum" id="5T7R"/>
<dbReference type="PDBsum" id="5UDP"/>
<dbReference type="PDBsum" id="5UOZ"/>
<dbReference type="PDBsum" id="5UQA"/>
<dbReference type="PDBsum" id="5URT"/>
<dbReference type="PDBsum" id="5URU"/>
<dbReference type="PDBsum" id="5USP"/>
<dbReference type="PDBsum" id="5USS"/>
<dbReference type="PDBsum" id="5USV"/>
<dbReference type="PDBsum" id="5UU2"/>
<dbReference type="PDBsum" id="5UU3"/>
<dbReference type="PDBsum" id="5UU4"/>
<dbReference type="PDBsum" id="5VIZ"/>
<dbReference type="PDBsum" id="5WBT"/>
<dbReference type="PDBsum" id="5WDM"/>
<dbReference type="PDBsum" id="5WOB"/>
<dbReference type="PDBsum" id="6B3Q"/>
<dbReference type="PDBsum" id="6B70"/>
<dbReference type="PDBsum" id="6BFC"/>
<dbReference type="PDBsum" id="6CE7"/>
<dbReference type="PDBsum" id="6CE9"/>
<dbReference type="PDBsum" id="6CEB"/>
<dbReference type="PDBsum" id="6CK2"/>
<dbReference type="PDBsum" id="6GNQ"/>
<dbReference type="PDBsum" id="6GV0"/>
<dbReference type="PDBsum" id="6H3M"/>
<dbReference type="PDBsum" id="6HN5"/>
<dbReference type="PDBsum" id="6JK8"/>
<dbReference type="PDBsum" id="6JR3"/>
<dbReference type="PDBsum" id="6K59"/>
<dbReference type="PDBsum" id="6NWV"/>
<dbReference type="PDBsum" id="6O17"/>
<dbReference type="PDBsum" id="6P4Z"/>
<dbReference type="PDBsum" id="6S34"/>
<dbReference type="PDBsum" id="6S4I"/>
<dbReference type="PDBsum" id="6S4J"/>
<dbReference type="PDBsum" id="6SOF"/>
<dbReference type="PDBsum" id="6TC2"/>
<dbReference type="PDBsum" id="6TYH"/>
<dbReference type="PDBsum" id="6U46"/>
<dbReference type="PDBsum" id="6VEP"/>
<dbReference type="PDBsum" id="6VER"/>
<dbReference type="PDBsum" id="6VES"/>
<dbReference type="PDBsum" id="6VET"/>
<dbReference type="PDBsum" id="6X4X"/>
<dbReference type="PDBsum" id="6Z7W"/>
<dbReference type="PDBsum" id="6Z7Y"/>
<dbReference type="PDBsum" id="7BW7"/>
<dbReference type="PDBsum" id="7BW8"/>
<dbReference type="PDBsum" id="7BWA"/>
<dbReference type="PDBsum" id="7JP3"/>
<dbReference type="PDBsum" id="7KD6"/>
<dbReference type="PDBsum" id="7MD4"/>
<dbReference type="PDBsum" id="7MD5"/>
<dbReference type="PDBsum" id="7MQO"/>
<dbReference type="PDBsum" id="7MQR"/>
<dbReference type="PDBsum" id="7MQS"/>
<dbReference type="PDBsum" id="7NHU"/>
<dbReference type="PDBsum" id="7NMG"/>
<dbReference type="PDBsum" id="7PG0"/>
<dbReference type="PDBsum" id="7PG2"/>
<dbReference type="PDBsum" id="7PG3"/>
<dbReference type="PDBsum" id="7PG4"/>
<dbReference type="PDBsum" id="7QAC"/>
<dbReference type="PDBsum" id="7QGF"/>
<dbReference type="PDBsum" id="7QID"/>
<dbReference type="PDBsum" id="7RKD"/>
<dbReference type="PDBsum" id="7RZE"/>
<dbReference type="PDBsum" id="7RZF"/>
<dbReference type="PDBsum" id="7RZI"/>
<dbReference type="PDBsum" id="7S4Y"/>
<dbReference type="PDBsum" id="7SL1"/>
<dbReference type="PDBsum" id="7SL2"/>
<dbReference type="PDBsum" id="7SL3"/>
<dbReference type="PDBsum" id="7SL4"/>
<dbReference type="PDBsum" id="7SL6"/>
<dbReference type="PDBsum" id="7SL7"/>
<dbReference type="PDBsum" id="7STH"/>
<dbReference type="PDBsum" id="7STI"/>
<dbReference type="PDBsum" id="7STJ"/>
<dbReference type="PDBsum" id="7STK"/>
<dbReference type="PDBsum" id="7U6E"/>
<dbReference type="PDBsum" id="7V3P"/>
<dbReference type="PDBsum" id="7YQ3"/>
<dbReference type="PDBsum" id="7YQ4"/>
<dbReference type="PDBsum" id="7YQ5"/>
<dbReference type="PDBsum" id="7Z5L"/>
<dbReference type="PDBsum" id="7Z5Q"/>
<dbReference type="PDBsum" id="8EYX"/>
<dbReference type="PDBsum" id="8EYY"/>
<dbReference type="PDBsum" id="8EZ0"/>
<dbReference type="PDBsum" id="8GSG"/>
<dbReference type="PDBsum" id="8GUY"/>
<dbReference type="PDBsum" id="8HGZ"/>
<dbReference type="PDBsum" id="8HSF"/>
<dbReference type="PDBsum" id="8HSK"/>
<dbReference type="PDBsum" id="8IPZ"/>
<dbReference type="PDBsum" id="8OKY"/>
<dbReference type="PDBsum" id="8ONI"/>
<dbReference type="PDBsum" id="8ONK"/>
<dbReference type="PDBsum" id="8ONP"/>
<dbReference type="PDBsum" id="8ONR"/>
<dbReference type="PDBsum" id="8PI4"/>
<dbReference type="PDBsum" id="8PI5"/>
<dbReference type="PDBsum" id="8PI6"/>
<dbReference type="PDBsum" id="8PJH"/>
<dbReference type="PDBsum" id="8RRP"/>
<dbReference type="PDBsum" id="8RVT"/>
<dbReference type="PDBsum" id="8SBD"/>
<dbReference type="PDBsum" id="8VCX"/>
<dbReference type="PDBsum" id="8VDD"/>
<dbReference type="PDBsum" id="8WU0"/>
<dbReference type="PDBsum" id="8Z4B"/>
<dbReference type="PDBsum" id="9LVC"/>
<dbReference type="PDBsum" id="9LVD"/>
<dbReference type="PDBsum" id="9LVE"/>
<dbReference type="PDBsum" id="9LVX"/>
<dbReference type="PDBsum" id="9LVY"/>
<dbReference type="PDBsum" id="9M4X"/>
<dbReference type="PDBsum" id="9M4Y"/>
<dbReference type="PDBsum" id="9M4Z"/>
<dbReference type="PDBsum" id="9M50"/>
<dbReference type="PDBsum" id="9M51"/>
<dbReference type="BMRB" id="P01308"/>
<dbReference type="EMDB" id="EMD-0247"/>
<dbReference type="EMDB" id="EMD-10273"/>
<dbReference type="EMDB" id="EMD-13385"/>
<dbReference type="EMDB" id="EMD-13386"/>
<dbReference type="EMDB" id="EMD-13387"/>
<dbReference type="EMDB" id="EMD-13388"/>
<dbReference type="EMDB" id="EMD-23766"/>
<dbReference type="EMDB" id="EMD-23767"/>
<dbReference type="EMDB" id="EMD-23949"/>
<dbReference type="EMDB" id="EMD-23950"/>
<dbReference type="EMDB" id="EMD-23951"/>
<dbReference type="EMDB" id="EMD-24757"/>
<dbReference type="EMDB" id="EMD-24758"/>
<dbReference type="EMDB" id="EMD-24761"/>
<dbReference type="EMDB" id="EMD-25188"/>
<dbReference type="EMDB" id="EMD-25189"/>
<dbReference type="EMDB" id="EMD-25190"/>
<dbReference type="EMDB" id="EMD-25191"/>
<dbReference type="EMDB" id="EMD-25192"/>
<dbReference type="EMDB" id="EMD-25193"/>
<dbReference type="EMDB" id="EMD-25428"/>
<dbReference type="EMDB" id="EMD-25429"/>
<dbReference type="EMDB" id="EMD-25430"/>
<dbReference type="EMDB" id="EMD-25431"/>
<dbReference type="EMDB" id="EMD-26364"/>
<dbReference type="EMDB" id="EMD-28723"/>
<dbReference type="EMDB" id="EMD-28724"/>
<dbReference type="EMDB" id="EMD-28725"/>
<dbReference type="EMDB" id="EMD-30229"/>
<dbReference type="EMDB" id="EMD-30230"/>
<dbReference type="EMDB" id="EMD-30231"/>
<dbReference type="EMDB" id="EMD-34018"/>
<dbReference type="EMDB" id="EMD-34019"/>
<dbReference type="EMDB" id="EMD-34020"/>
<dbReference type="EMDB" id="EMD-34281"/>
<dbReference type="EMDB" id="EMD-40305"/>
<dbReference type="EMDB" id="EMD-7041"/>
<dbReference type="EMDB" id="EMD-7062"/>
<dbReference type="EMDB" id="EMD-7461"/>
<dbReference type="EMDB" id="EMD-7462"/>
<dbReference type="EMDB" id="EMD-7463"/>
<dbReference type="EMDB" id="EMD-9838"/>
<dbReference type="EMDB" id="EMD-9878"/>
<dbReference type="PCDDB" id="P01308"/>
<dbReference type="SASBDB" id="P01308"/>
<dbReference type="SMR" id="P01308"/>
<dbReference type="BioGRID" id="109842">
    <property type="interactions" value="526"/>
</dbReference>
<dbReference type="ComplexPortal" id="CPX-943">
    <property type="entry name" value="Insulin complex"/>
</dbReference>
<dbReference type="DIP" id="DIP-6024N"/>
<dbReference type="FunCoup" id="P01308">
    <property type="interactions" value="1333"/>
</dbReference>
<dbReference type="IntAct" id="P01308">
    <property type="interactions" value="39"/>
</dbReference>
<dbReference type="MINT" id="P01308"/>
<dbReference type="STRING" id="9606.ENSP00000380432"/>
<dbReference type="ChEMBL" id="CHEMBL5881"/>
<dbReference type="DrugBank" id="DB01289">
    <property type="generic name" value="Glisoxepide"/>
</dbReference>
<dbReference type="DrugBank" id="DB09564">
    <property type="generic name" value="Insulin degludec"/>
</dbReference>
<dbReference type="DrugBank" id="DB00638">
    <property type="generic name" value="Inulin"/>
</dbReference>
<dbReference type="DrugBank" id="DB06315">
    <property type="generic name" value="ISF402"/>
</dbReference>
<dbReference type="DrugBank" id="DB01776">
    <property type="generic name" value="M-Cresol"/>
</dbReference>
<dbReference type="DrugBank" id="DB08231">
    <property type="generic name" value="Myristic acid"/>
</dbReference>
<dbReference type="DrugBank" id="DB01593">
    <property type="generic name" value="Zinc"/>
</dbReference>
<dbReference type="DrugBank" id="DB14487">
    <property type="generic name" value="Zinc acetate"/>
</dbReference>
<dbReference type="DrugBank" id="DB14533">
    <property type="generic name" value="Zinc chloride"/>
</dbReference>
<dbReference type="DrugBank" id="DB14548">
    <property type="generic name" value="Zinc sulfate, unspecified form"/>
</dbReference>
<dbReference type="Allergome" id="2121">
    <property type="allergen name" value="Hom s Insulin"/>
</dbReference>
<dbReference type="CarbonylDB" id="P01308"/>
<dbReference type="iPTMnet" id="P01308"/>
<dbReference type="PhosphoSitePlus" id="P01308"/>
<dbReference type="BioMuta" id="INS"/>
<dbReference type="DMDM" id="124617"/>
<dbReference type="jPOST" id="P01308"/>
<dbReference type="MassIVE" id="P01308"/>
<dbReference type="PaxDb" id="9606-ENSP00000380432"/>
<dbReference type="PeptideAtlas" id="P01308"/>
<dbReference type="ProteomicsDB" id="51374">
    <molecule id="P01308-1"/>
</dbReference>
<dbReference type="ABCD" id="P01308">
    <property type="antibodies" value="35 sequenced antibodies"/>
</dbReference>
<dbReference type="Antibodypedia" id="56056">
    <property type="antibodies" value="3481 antibodies from 51 providers"/>
</dbReference>
<dbReference type="DNASU" id="3630"/>
<dbReference type="Ensembl" id="ENST00000250971.7">
    <molecule id="P01308-1"/>
    <property type="protein sequence ID" value="ENSP00000250971.3"/>
    <property type="gene ID" value="ENSG00000254647.7"/>
</dbReference>
<dbReference type="Ensembl" id="ENST00000381330.5">
    <molecule id="P01308-1"/>
    <property type="protein sequence ID" value="ENSP00000370731.5"/>
    <property type="gene ID" value="ENSG00000254647.7"/>
</dbReference>
<dbReference type="Ensembl" id="ENST00000397262.5">
    <molecule id="P01308-1"/>
    <property type="protein sequence ID" value="ENSP00000380432.1"/>
    <property type="gene ID" value="ENSG00000254647.7"/>
</dbReference>
<dbReference type="GeneID" id="3630"/>
<dbReference type="KEGG" id="hsa:3630"/>
<dbReference type="MANE-Select" id="ENST00000381330.5">
    <property type="protein sequence ID" value="ENSP00000370731.5"/>
    <property type="RefSeq nucleotide sequence ID" value="NM_000207.3"/>
    <property type="RefSeq protein sequence ID" value="NP_000198.1"/>
</dbReference>
<dbReference type="UCSC" id="uc001lvn.3">
    <molecule id="P01308-1"/>
    <property type="organism name" value="human"/>
</dbReference>
<dbReference type="AGR" id="HGNC:6081"/>
<dbReference type="CTD" id="3630"/>
<dbReference type="DisGeNET" id="3630"/>
<dbReference type="GeneCards" id="INS"/>
<dbReference type="GeneReviews" id="INS"/>
<dbReference type="HGNC" id="HGNC:6081">
    <property type="gene designation" value="INS"/>
</dbReference>
<dbReference type="HPA" id="ENSG00000254647">
    <property type="expression patterns" value="Tissue enriched (pancreas)"/>
</dbReference>
<dbReference type="MalaCards" id="INS"/>
<dbReference type="MIM" id="125852">
    <property type="type" value="phenotype"/>
</dbReference>
<dbReference type="MIM" id="176730">
    <property type="type" value="gene"/>
</dbReference>
<dbReference type="MIM" id="613370">
    <property type="type" value="phenotype"/>
</dbReference>
<dbReference type="MIM" id="616214">
    <property type="type" value="phenotype"/>
</dbReference>
<dbReference type="MIM" id="618858">
    <property type="type" value="phenotype"/>
</dbReference>
<dbReference type="neXtProt" id="NX_P01308"/>
<dbReference type="OpenTargets" id="ENSG00000254647"/>
<dbReference type="Orphanet" id="99885">
    <property type="disease" value="Isolated permanent neonatal diabetes mellitus"/>
</dbReference>
<dbReference type="Orphanet" id="552">
    <property type="disease" value="MODY"/>
</dbReference>
<dbReference type="PharmGKB" id="PA201"/>
<dbReference type="VEuPathDB" id="HostDB:ENSG00000254647"/>
<dbReference type="eggNOG" id="ENOG502S5P5">
    <property type="taxonomic scope" value="Eukaryota"/>
</dbReference>
<dbReference type="GeneTree" id="ENSGT00390000015440"/>
<dbReference type="InParanoid" id="P01308"/>
<dbReference type="OMA" id="LANQHLC"/>
<dbReference type="OrthoDB" id="10019596at2759"/>
<dbReference type="PAN-GO" id="P01308">
    <property type="GO annotations" value="3 GO annotations based on evolutionary models"/>
</dbReference>
<dbReference type="PhylomeDB" id="P01308"/>
<dbReference type="TreeFam" id="TF332820"/>
<dbReference type="BioCyc" id="MetaCyc:MONOMER-16190"/>
<dbReference type="PathwayCommons" id="P01308"/>
<dbReference type="Reactome" id="R-HSA-210745">
    <property type="pathway name" value="Regulation of gene expression in beta cells"/>
</dbReference>
<dbReference type="Reactome" id="R-HSA-264876">
    <property type="pathway name" value="Insulin processing"/>
</dbReference>
<dbReference type="Reactome" id="R-HSA-422085">
    <property type="pathway name" value="Synthesis, secretion, and deacylation of Ghrelin"/>
</dbReference>
<dbReference type="Reactome" id="R-HSA-422356">
    <property type="pathway name" value="Regulation of insulin secretion"/>
</dbReference>
<dbReference type="Reactome" id="R-HSA-6807878">
    <property type="pathway name" value="COPI-mediated anterograde transport"/>
</dbReference>
<dbReference type="Reactome" id="R-HSA-6811558">
    <property type="pathway name" value="PI5P, PP2A and IER3 Regulate PI3K/AKT Signaling"/>
</dbReference>
<dbReference type="Reactome" id="R-HSA-74713">
    <property type="pathway name" value="IRS activation"/>
</dbReference>
<dbReference type="Reactome" id="R-HSA-74749">
    <property type="pathway name" value="Signal attenuation"/>
</dbReference>
<dbReference type="Reactome" id="R-HSA-74751">
    <property type="pathway name" value="Insulin receptor signalling cascade"/>
</dbReference>
<dbReference type="Reactome" id="R-HSA-74752">
    <property type="pathway name" value="Signaling by Insulin receptor"/>
</dbReference>
<dbReference type="Reactome" id="R-HSA-77387">
    <property type="pathway name" value="Insulin receptor recycling"/>
</dbReference>
<dbReference type="Reactome" id="R-HSA-9615017">
    <property type="pathway name" value="FOXO-mediated transcription of oxidative stress, metabolic and neuronal genes"/>
</dbReference>
<dbReference type="Reactome" id="R-HSA-9768919">
    <property type="pathway name" value="NPAS4 regulates expression of target genes"/>
</dbReference>
<dbReference type="Reactome" id="R-HSA-977225">
    <property type="pathway name" value="Amyloid fiber formation"/>
</dbReference>
<dbReference type="SignaLink" id="P01308"/>
<dbReference type="SIGNOR" id="P01308"/>
<dbReference type="BioGRID-ORCS" id="3630">
    <property type="hits" value="382 hits in 1121 CRISPR screens"/>
</dbReference>
<dbReference type="EvolutionaryTrace" id="P01308"/>
<dbReference type="GeneWiki" id="Insulin"/>
<dbReference type="GenomeRNAi" id="3630"/>
<dbReference type="Pharos" id="P01308">
    <property type="development level" value="Tbio"/>
</dbReference>
<dbReference type="PRO" id="PR:P01308"/>
<dbReference type="Proteomes" id="UP000005640">
    <property type="component" value="Chromosome 11"/>
</dbReference>
<dbReference type="RNAct" id="P01308">
    <property type="molecule type" value="protein"/>
</dbReference>
<dbReference type="Bgee" id="ENSG00000254647">
    <property type="expression patterns" value="Expressed in type B pancreatic cell and 92 other cell types or tissues"/>
</dbReference>
<dbReference type="ExpressionAtlas" id="P01308">
    <property type="expression patterns" value="baseline and differential"/>
</dbReference>
<dbReference type="GO" id="GO:0005788">
    <property type="term" value="C:endoplasmic reticulum lumen"/>
    <property type="evidence" value="ECO:0000304"/>
    <property type="project" value="Reactome"/>
</dbReference>
<dbReference type="GO" id="GO:0033116">
    <property type="term" value="C:endoplasmic reticulum-Golgi intermediate compartment membrane"/>
    <property type="evidence" value="ECO:0000304"/>
    <property type="project" value="Reactome"/>
</dbReference>
<dbReference type="GO" id="GO:0031904">
    <property type="term" value="C:endosome lumen"/>
    <property type="evidence" value="ECO:0000304"/>
    <property type="project" value="Reactome"/>
</dbReference>
<dbReference type="GO" id="GO:0005576">
    <property type="term" value="C:extracellular region"/>
    <property type="evidence" value="ECO:0000304"/>
    <property type="project" value="Reactome"/>
</dbReference>
<dbReference type="GO" id="GO:0005615">
    <property type="term" value="C:extracellular space"/>
    <property type="evidence" value="ECO:0000314"/>
    <property type="project" value="BHF-UCL"/>
</dbReference>
<dbReference type="GO" id="GO:0005796">
    <property type="term" value="C:Golgi lumen"/>
    <property type="evidence" value="ECO:0000304"/>
    <property type="project" value="Reactome"/>
</dbReference>
<dbReference type="GO" id="GO:0000139">
    <property type="term" value="C:Golgi membrane"/>
    <property type="evidence" value="ECO:0000304"/>
    <property type="project" value="Reactome"/>
</dbReference>
<dbReference type="GO" id="GO:0034774">
    <property type="term" value="C:secretory granule lumen"/>
    <property type="evidence" value="ECO:0000304"/>
    <property type="project" value="Reactome"/>
</dbReference>
<dbReference type="GO" id="GO:0030133">
    <property type="term" value="C:transport vesicle"/>
    <property type="evidence" value="ECO:0000304"/>
    <property type="project" value="Reactome"/>
</dbReference>
<dbReference type="GO" id="GO:0005179">
    <property type="term" value="F:hormone activity"/>
    <property type="evidence" value="ECO:0000315"/>
    <property type="project" value="BHF-UCL"/>
</dbReference>
<dbReference type="GO" id="GO:0042802">
    <property type="term" value="F:identical protein binding"/>
    <property type="evidence" value="ECO:0000353"/>
    <property type="project" value="IntAct"/>
</dbReference>
<dbReference type="GO" id="GO:0005158">
    <property type="term" value="F:insulin receptor binding"/>
    <property type="evidence" value="ECO:0000314"/>
    <property type="project" value="UniProtKB"/>
</dbReference>
<dbReference type="GO" id="GO:0005159">
    <property type="term" value="F:insulin-like growth factor receptor binding"/>
    <property type="evidence" value="ECO:0000353"/>
    <property type="project" value="BHF-UCL"/>
</dbReference>
<dbReference type="GO" id="GO:0002020">
    <property type="term" value="F:protease binding"/>
    <property type="evidence" value="ECO:0000353"/>
    <property type="project" value="UniProtKB"/>
</dbReference>
<dbReference type="GO" id="GO:0032148">
    <property type="term" value="P:activation of protein kinase B activity"/>
    <property type="evidence" value="ECO:0000314"/>
    <property type="project" value="BHF-UCL"/>
</dbReference>
<dbReference type="GO" id="GO:0006953">
    <property type="term" value="P:acute-phase response"/>
    <property type="evidence" value="ECO:0000314"/>
    <property type="project" value="BHF-UCL"/>
</dbReference>
<dbReference type="GO" id="GO:0046631">
    <property type="term" value="P:alpha-beta T cell activation"/>
    <property type="evidence" value="ECO:0000314"/>
    <property type="project" value="UniProtKB"/>
</dbReference>
<dbReference type="GO" id="GO:0007267">
    <property type="term" value="P:cell-cell signaling"/>
    <property type="evidence" value="ECO:0000305"/>
    <property type="project" value="UniProtKB"/>
</dbReference>
<dbReference type="GO" id="GO:0050890">
    <property type="term" value="P:cognition"/>
    <property type="evidence" value="ECO:0000304"/>
    <property type="project" value="ARUK-UCL"/>
</dbReference>
<dbReference type="GO" id="GO:0055089">
    <property type="term" value="P:fatty acid homeostasis"/>
    <property type="evidence" value="ECO:0000315"/>
    <property type="project" value="BHF-UCL"/>
</dbReference>
<dbReference type="GO" id="GO:0007186">
    <property type="term" value="P:G protein-coupled receptor signaling pathway"/>
    <property type="evidence" value="ECO:0000314"/>
    <property type="project" value="BHF-UCL"/>
</dbReference>
<dbReference type="GO" id="GO:0042593">
    <property type="term" value="P:glucose homeostasis"/>
    <property type="evidence" value="ECO:0000315"/>
    <property type="project" value="BHF-UCL"/>
</dbReference>
<dbReference type="GO" id="GO:0006006">
    <property type="term" value="P:glucose metabolic process"/>
    <property type="evidence" value="ECO:0007669"/>
    <property type="project" value="UniProtKB-KW"/>
</dbReference>
<dbReference type="GO" id="GO:0008286">
    <property type="term" value="P:insulin receptor signaling pathway"/>
    <property type="evidence" value="ECO:0000314"/>
    <property type="project" value="UniProtKB"/>
</dbReference>
<dbReference type="GO" id="GO:0002674">
    <property type="term" value="P:negative regulation of acute inflammatory response"/>
    <property type="evidence" value="ECO:0000314"/>
    <property type="project" value="BHF-UCL"/>
</dbReference>
<dbReference type="GO" id="GO:0045922">
    <property type="term" value="P:negative regulation of fatty acid metabolic process"/>
    <property type="evidence" value="ECO:0000315"/>
    <property type="project" value="BHF-UCL"/>
</dbReference>
<dbReference type="GO" id="GO:2000252">
    <property type="term" value="P:negative regulation of feeding behavior"/>
    <property type="evidence" value="ECO:0000314"/>
    <property type="project" value="DFLAT"/>
</dbReference>
<dbReference type="GO" id="GO:0010629">
    <property type="term" value="P:negative regulation of gene expression"/>
    <property type="evidence" value="ECO:0000314"/>
    <property type="project" value="ARUK-UCL"/>
</dbReference>
<dbReference type="GO" id="GO:0045721">
    <property type="term" value="P:negative regulation of gluconeogenesis"/>
    <property type="evidence" value="ECO:0000303"/>
    <property type="project" value="BHF-UCL"/>
</dbReference>
<dbReference type="GO" id="GO:0045818">
    <property type="term" value="P:negative regulation of glycogen catabolic process"/>
    <property type="evidence" value="ECO:0000315"/>
    <property type="project" value="BHF-UCL"/>
</dbReference>
<dbReference type="GO" id="GO:0050995">
    <property type="term" value="P:negative regulation of lipid catabolic process"/>
    <property type="evidence" value="ECO:0000315"/>
    <property type="project" value="AgBase"/>
</dbReference>
<dbReference type="GO" id="GO:1902176">
    <property type="term" value="P:negative regulation of oxidative stress-induced intrinsic apoptotic signaling pathway"/>
    <property type="evidence" value="ECO:0000303"/>
    <property type="project" value="BHF-UCL"/>
</dbReference>
<dbReference type="GO" id="GO:0042177">
    <property type="term" value="P:negative regulation of protein catabolic process"/>
    <property type="evidence" value="ECO:0000314"/>
    <property type="project" value="UniProtKB"/>
</dbReference>
<dbReference type="GO" id="GO:0050709">
    <property type="term" value="P:negative regulation of protein secretion"/>
    <property type="evidence" value="ECO:0000314"/>
    <property type="project" value="BHF-UCL"/>
</dbReference>
<dbReference type="GO" id="GO:1903427">
    <property type="term" value="P:negative regulation of reactive oxygen species biosynthetic process"/>
    <property type="evidence" value="ECO:0000316"/>
    <property type="project" value="ARUK-UCL"/>
</dbReference>
<dbReference type="GO" id="GO:0060266">
    <property type="term" value="P:negative regulation of respiratory burst involved in inflammatory response"/>
    <property type="evidence" value="ECO:0000314"/>
    <property type="project" value="BHF-UCL"/>
</dbReference>
<dbReference type="GO" id="GO:1990535">
    <property type="term" value="P:neuron projection maintenance"/>
    <property type="evidence" value="ECO:0000316"/>
    <property type="project" value="ARUK-UCL"/>
</dbReference>
<dbReference type="GO" id="GO:0038060">
    <property type="term" value="P:nitric oxide-cGMP-mediated signaling"/>
    <property type="evidence" value="ECO:0000314"/>
    <property type="project" value="UniProtKB"/>
</dbReference>
<dbReference type="GO" id="GO:0090336">
    <property type="term" value="P:positive regulation of brown fat cell differentiation"/>
    <property type="evidence" value="ECO:0000304"/>
    <property type="project" value="BHF-UCL"/>
</dbReference>
<dbReference type="GO" id="GO:0043123">
    <property type="term" value="P:positive regulation of canonical NF-kappaB signal transduction"/>
    <property type="evidence" value="ECO:0000314"/>
    <property type="project" value="BHF-UCL"/>
</dbReference>
<dbReference type="GO" id="GO:0045597">
    <property type="term" value="P:positive regulation of cell differentiation"/>
    <property type="evidence" value="ECO:0000303"/>
    <property type="project" value="BHF-UCL"/>
</dbReference>
<dbReference type="GO" id="GO:0030307">
    <property type="term" value="P:positive regulation of cell growth"/>
    <property type="evidence" value="ECO:0000303"/>
    <property type="project" value="BHF-UCL"/>
</dbReference>
<dbReference type="GO" id="GO:0030335">
    <property type="term" value="P:positive regulation of cell migration"/>
    <property type="evidence" value="ECO:0000250"/>
    <property type="project" value="BHF-UCL"/>
</dbReference>
<dbReference type="GO" id="GO:0008284">
    <property type="term" value="P:positive regulation of cell population proliferation"/>
    <property type="evidence" value="ECO:0000314"/>
    <property type="project" value="BHF-UCL"/>
</dbReference>
<dbReference type="GO" id="GO:0001819">
    <property type="term" value="P:positive regulation of cytokine production"/>
    <property type="evidence" value="ECO:0000314"/>
    <property type="project" value="UniProtKB"/>
</dbReference>
<dbReference type="GO" id="GO:0046326">
    <property type="term" value="P:positive regulation of D-glucose import"/>
    <property type="evidence" value="ECO:0000314"/>
    <property type="project" value="UniProtKB"/>
</dbReference>
<dbReference type="GO" id="GO:1902952">
    <property type="term" value="P:positive regulation of dendritic spine maintenance"/>
    <property type="evidence" value="ECO:0000316"/>
    <property type="project" value="ARUK-UCL"/>
</dbReference>
<dbReference type="GO" id="GO:0010628">
    <property type="term" value="P:positive regulation of gene expression"/>
    <property type="evidence" value="ECO:0000316"/>
    <property type="project" value="BHF-UCL"/>
</dbReference>
<dbReference type="GO" id="GO:0045725">
    <property type="term" value="P:positive regulation of glycogen biosynthetic process"/>
    <property type="evidence" value="ECO:0000314"/>
    <property type="project" value="BHF-UCL"/>
</dbReference>
<dbReference type="GO" id="GO:0045821">
    <property type="term" value="P:positive regulation of glycolytic process"/>
    <property type="evidence" value="ECO:0000314"/>
    <property type="project" value="BHF-UCL"/>
</dbReference>
<dbReference type="GO" id="GO:0046628">
    <property type="term" value="P:positive regulation of insulin receptor signaling pathway"/>
    <property type="evidence" value="ECO:0000314"/>
    <property type="project" value="BHF-UCL"/>
</dbReference>
<dbReference type="GO" id="GO:0046889">
    <property type="term" value="P:positive regulation of lipid biosynthetic process"/>
    <property type="evidence" value="ECO:0000303"/>
    <property type="project" value="BHF-UCL"/>
</dbReference>
<dbReference type="GO" id="GO:1900273">
    <property type="term" value="P:positive regulation of long-term synaptic potentiation"/>
    <property type="evidence" value="ECO:0000304"/>
    <property type="project" value="ARUK-UCL"/>
</dbReference>
<dbReference type="GO" id="GO:0043410">
    <property type="term" value="P:positive regulation of MAPK cascade"/>
    <property type="evidence" value="ECO:0000314"/>
    <property type="project" value="BHF-UCL"/>
</dbReference>
<dbReference type="GO" id="GO:0045840">
    <property type="term" value="P:positive regulation of mitotic nuclear division"/>
    <property type="evidence" value="ECO:0000314"/>
    <property type="project" value="UniProtKB"/>
</dbReference>
<dbReference type="GO" id="GO:0010976">
    <property type="term" value="P:positive regulation of neuron projection development"/>
    <property type="evidence" value="ECO:0000305"/>
    <property type="project" value="UniProt"/>
</dbReference>
<dbReference type="GO" id="GO:0010750">
    <property type="term" value="P:positive regulation of nitric oxide mediated signal transduction"/>
    <property type="evidence" value="ECO:0000314"/>
    <property type="project" value="UniProtKB"/>
</dbReference>
<dbReference type="GO" id="GO:0051000">
    <property type="term" value="P:positive regulation of nitric-oxide synthase activity"/>
    <property type="evidence" value="ECO:0000303"/>
    <property type="project" value="UniProtKB"/>
</dbReference>
<dbReference type="GO" id="GO:0090277">
    <property type="term" value="P:positive regulation of peptide hormone secretion"/>
    <property type="evidence" value="ECO:0000304"/>
    <property type="project" value="BHF-UCL"/>
</dbReference>
<dbReference type="GO" id="GO:0051897">
    <property type="term" value="P:positive regulation of phosphatidylinositol 3-kinase/protein kinase B signal transduction"/>
    <property type="evidence" value="ECO:0000314"/>
    <property type="project" value="BHF-UCL"/>
</dbReference>
<dbReference type="GO" id="GO:1900182">
    <property type="term" value="P:positive regulation of protein localization to nucleus"/>
    <property type="evidence" value="ECO:0000314"/>
    <property type="project" value="BHF-UCL"/>
</dbReference>
<dbReference type="GO" id="GO:0050714">
    <property type="term" value="P:positive regulation of protein secretion"/>
    <property type="evidence" value="ECO:0000318"/>
    <property type="project" value="GO_Central"/>
</dbReference>
<dbReference type="GO" id="GO:0060267">
    <property type="term" value="P:positive regulation of respiratory burst"/>
    <property type="evidence" value="ECO:0000314"/>
    <property type="project" value="BHF-UCL"/>
</dbReference>
<dbReference type="GO" id="GO:0006355">
    <property type="term" value="P:regulation of DNA-templated transcription"/>
    <property type="evidence" value="ECO:0000303"/>
    <property type="project" value="BHF-UCL"/>
</dbReference>
<dbReference type="GO" id="GO:0032880">
    <property type="term" value="P:regulation of protein localization"/>
    <property type="evidence" value="ECO:0000314"/>
    <property type="project" value="BHF-UCL"/>
</dbReference>
<dbReference type="GO" id="GO:1903076">
    <property type="term" value="P:regulation of protein localization to plasma membrane"/>
    <property type="evidence" value="ECO:0000316"/>
    <property type="project" value="ARUK-UCL"/>
</dbReference>
<dbReference type="GO" id="GO:0050708">
    <property type="term" value="P:regulation of protein secretion"/>
    <property type="evidence" value="ECO:0000314"/>
    <property type="project" value="UniProtKB"/>
</dbReference>
<dbReference type="GO" id="GO:0048167">
    <property type="term" value="P:regulation of synaptic plasticity"/>
    <property type="evidence" value="ECO:0000304"/>
    <property type="project" value="ARUK-UCL"/>
</dbReference>
<dbReference type="GO" id="GO:0042311">
    <property type="term" value="P:vasodilation"/>
    <property type="evidence" value="ECO:0000314"/>
    <property type="project" value="UniProtKB"/>
</dbReference>
<dbReference type="GO" id="GO:0042060">
    <property type="term" value="P:wound healing"/>
    <property type="evidence" value="ECO:0000314"/>
    <property type="project" value="BHF-UCL"/>
</dbReference>
<dbReference type="CDD" id="cd04367">
    <property type="entry name" value="IlGF_insulin_like"/>
    <property type="match status" value="1"/>
</dbReference>
<dbReference type="FunFam" id="1.10.100.10:FF:000003">
    <property type="entry name" value="Insulin"/>
    <property type="match status" value="1"/>
</dbReference>
<dbReference type="Gene3D" id="1.10.100.10">
    <property type="entry name" value="Insulin-like"/>
    <property type="match status" value="1"/>
</dbReference>
<dbReference type="InterPro" id="IPR004825">
    <property type="entry name" value="Insulin"/>
</dbReference>
<dbReference type="InterPro" id="IPR016179">
    <property type="entry name" value="Insulin-like"/>
</dbReference>
<dbReference type="InterPro" id="IPR036438">
    <property type="entry name" value="Insulin-like_sf"/>
</dbReference>
<dbReference type="InterPro" id="IPR022353">
    <property type="entry name" value="Insulin_CS"/>
</dbReference>
<dbReference type="InterPro" id="IPR022352">
    <property type="entry name" value="Insulin_family"/>
</dbReference>
<dbReference type="PANTHER" id="PTHR11454:SF9">
    <property type="entry name" value="INSULIN"/>
    <property type="match status" value="1"/>
</dbReference>
<dbReference type="PANTHER" id="PTHR11454">
    <property type="entry name" value="INSULIN/INSULIN GROWTH FACTOR"/>
    <property type="match status" value="1"/>
</dbReference>
<dbReference type="Pfam" id="PF00049">
    <property type="entry name" value="Insulin"/>
    <property type="match status" value="1"/>
</dbReference>
<dbReference type="PRINTS" id="PR00277">
    <property type="entry name" value="INSULIN"/>
</dbReference>
<dbReference type="PRINTS" id="PR00276">
    <property type="entry name" value="INSULINFAMLY"/>
</dbReference>
<dbReference type="SMART" id="SM00078">
    <property type="entry name" value="IlGF"/>
    <property type="match status" value="1"/>
</dbReference>
<dbReference type="SUPFAM" id="SSF56994">
    <property type="entry name" value="Insulin-like"/>
    <property type="match status" value="1"/>
</dbReference>
<dbReference type="PROSITE" id="PS00262">
    <property type="entry name" value="INSULIN"/>
    <property type="match status" value="1"/>
</dbReference>
<reference key="1">
    <citation type="journal article" date="1980" name="Nature">
        <title>Sequence of the human insulin gene.</title>
        <authorList>
            <person name="Bell G.I."/>
            <person name="Pictet R.L."/>
            <person name="Rutter W.J."/>
            <person name="Cordell B."/>
            <person name="Tischer E."/>
            <person name="Goodman H.M."/>
        </authorList>
    </citation>
    <scope>NUCLEOTIDE SEQUENCE [GENOMIC DNA]</scope>
</reference>
<reference key="2">
    <citation type="journal article" date="1980" name="Science">
        <title>Genetic variation in the human insulin gene.</title>
        <authorList>
            <person name="Ullrich A."/>
            <person name="Dull T.J."/>
            <person name="Gray A."/>
            <person name="Brosius J."/>
            <person name="Sures I."/>
        </authorList>
    </citation>
    <scope>NUCLEOTIDE SEQUENCE [GENOMIC DNA]</scope>
</reference>
<reference key="3">
    <citation type="journal article" date="1979" name="Nature">
        <title>Nucleotide sequence of a cDNA clone encoding human preproinsulin.</title>
        <authorList>
            <person name="Bell G.I."/>
            <person name="Swain W.F."/>
            <person name="Pictet R.L."/>
            <person name="Cordell B."/>
            <person name="Goodman H.M."/>
            <person name="Rutter W.J."/>
        </authorList>
    </citation>
    <scope>NUCLEOTIDE SEQUENCE [GENOMIC DNA]</scope>
</reference>
<reference key="4">
    <citation type="journal article" date="1980" name="Science">
        <title>Nucleotide sequence of human preproinsulin complementary DNA.</title>
        <authorList>
            <person name="Sures I."/>
            <person name="Goeddel D.V."/>
            <person name="Gray A."/>
            <person name="Ullrich A."/>
        </authorList>
    </citation>
    <scope>NUCLEOTIDE SEQUENCE [GENOMIC DNA]</scope>
</reference>
<reference key="5">
    <citation type="journal article" date="1993" name="Nat. Genet.">
        <title>Susceptibility to insulin dependent diabetes mellitus maps to a 4.1 kb segment of DNA spanning the insulin gene and associated VNTR.</title>
        <authorList>
            <person name="Lucassen A.M."/>
            <person name="Julier C."/>
            <person name="Beressi J.-P."/>
            <person name="Boitard C."/>
            <person name="Froguel P."/>
            <person name="Lathrop M."/>
            <person name="Bell J.I."/>
        </authorList>
    </citation>
    <scope>NUCLEOTIDE SEQUENCE [GENOMIC DNA]</scope>
</reference>
<reference key="6">
    <citation type="journal article" date="2004" name="Lancet">
        <title>Insulinomas and expression of an insulin splice variant.</title>
        <authorList>
            <person name="Minn A.H."/>
            <person name="Kayton M."/>
            <person name="Lorang D."/>
            <person name="Hoffmann S.C."/>
            <person name="Harlan D.M."/>
            <person name="Libutti S.K."/>
            <person name="Shalev A."/>
        </authorList>
    </citation>
    <scope>NUCLEOTIDE SEQUENCE [MRNA]</scope>
</reference>
<reference key="7">
    <citation type="journal article" date="2003" name="Genome Res.">
        <title>Global haplotype diversity in the human insulin gene region.</title>
        <authorList>
            <person name="Stead J.D.H."/>
            <person name="Hurles M.E."/>
            <person name="Jeffreys A.J."/>
        </authorList>
    </citation>
    <scope>NUCLEOTIDE SEQUENCE [GENOMIC DNA]</scope>
</reference>
<reference key="8">
    <citation type="submission" date="2004-10" db="EMBL/GenBank/DDBJ databases">
        <title>Cloning of human full-length CDSs in BD Creator(TM) system donor vector.</title>
        <authorList>
            <person name="Kalnine N."/>
            <person name="Chen X."/>
            <person name="Rolfs A."/>
            <person name="Halleck A."/>
            <person name="Hines L."/>
            <person name="Eisenstein S."/>
            <person name="Koundinya M."/>
            <person name="Raphael J."/>
            <person name="Moreira D."/>
            <person name="Kelley T."/>
            <person name="LaBaer J."/>
            <person name="Lin Y."/>
            <person name="Phelan M."/>
            <person name="Farmer A."/>
        </authorList>
    </citation>
    <scope>NUCLEOTIDE SEQUENCE [LARGE SCALE MRNA]</scope>
</reference>
<reference key="9">
    <citation type="submission" date="2005-07" db="EMBL/GenBank/DDBJ databases">
        <authorList>
            <person name="Mural R.J."/>
            <person name="Istrail S."/>
            <person name="Sutton G.G."/>
            <person name="Florea L."/>
            <person name="Halpern A.L."/>
            <person name="Mobarry C.M."/>
            <person name="Lippert R."/>
            <person name="Walenz B."/>
            <person name="Shatkay H."/>
            <person name="Dew I."/>
            <person name="Miller J.R."/>
            <person name="Flanigan M.J."/>
            <person name="Edwards N.J."/>
            <person name="Bolanos R."/>
            <person name="Fasulo D."/>
            <person name="Halldorsson B.V."/>
            <person name="Hannenhalli S."/>
            <person name="Turner R."/>
            <person name="Yooseph S."/>
            <person name="Lu F."/>
            <person name="Nusskern D.R."/>
            <person name="Shue B.C."/>
            <person name="Zheng X.H."/>
            <person name="Zhong F."/>
            <person name="Delcher A.L."/>
            <person name="Huson D.H."/>
            <person name="Kravitz S.A."/>
            <person name="Mouchard L."/>
            <person name="Reinert K."/>
            <person name="Remington K.A."/>
            <person name="Clark A.G."/>
            <person name="Waterman M.S."/>
            <person name="Eichler E.E."/>
            <person name="Adams M.D."/>
            <person name="Hunkapiller M.W."/>
            <person name="Myers E.W."/>
            <person name="Venter J.C."/>
        </authorList>
    </citation>
    <scope>NUCLEOTIDE SEQUENCE [LARGE SCALE GENOMIC DNA]</scope>
</reference>
<reference key="10">
    <citation type="journal article" date="2004" name="Genome Res.">
        <title>The status, quality, and expansion of the NIH full-length cDNA project: the Mammalian Gene Collection (MGC).</title>
        <authorList>
            <consortium name="The MGC Project Team"/>
        </authorList>
    </citation>
    <scope>NUCLEOTIDE SEQUENCE [LARGE SCALE MRNA]</scope>
    <source>
        <tissue>Pancreas</tissue>
    </source>
</reference>
<reference key="11">
    <citation type="submission" date="1998-07" db="EMBL/GenBank/DDBJ databases">
        <title>Description of a novel RFLP diallelic polymorphism (-127 BsgI C/G) within the 5' region of insulin gene.</title>
        <authorList>
            <person name="Fajardy I.I."/>
            <person name="Weill J.J."/>
            <person name="Stuckens C.C."/>
            <person name="Danze P.M.P."/>
        </authorList>
    </citation>
    <scope>NUCLEOTIDE SEQUENCE [GENOMIC DNA] OF 1-59</scope>
    <source>
        <tissue>Blood</tissue>
    </source>
</reference>
<reference key="12">
    <citation type="journal article" date="1960" name="Nature">
        <title>Amino-acid sequence of human insulin.</title>
        <authorList>
            <person name="Nicol D.S.H.W."/>
            <person name="Smith L.F."/>
        </authorList>
    </citation>
    <scope>PROTEIN SEQUENCE OF 25-54 AND 90-110</scope>
</reference>
<reference key="13">
    <citation type="journal article" date="1971" name="J. Biol. Chem.">
        <title>Studies on human proinsulin. Isolation and amino acid sequence of the human pancreatic C-peptide.</title>
        <authorList>
            <person name="Oyer P.E."/>
            <person name="Cho S."/>
            <person name="Peterson J.D."/>
            <person name="Steiner D.F."/>
        </authorList>
    </citation>
    <scope>PROTEIN SEQUENCE OF 57-87</scope>
</reference>
<reference key="14">
    <citation type="journal article" date="1971" name="Eur. J. Biochem.">
        <title>The amino acid sequence of the C-peptide of human proinsulin.</title>
        <authorList>
            <person name="Ko A."/>
            <person name="Smyth D.G."/>
            <person name="Markussen J."/>
            <person name="Sundby F."/>
        </authorList>
    </citation>
    <scope>PROTEIN SEQUENCE OF 57-87</scope>
</reference>
<reference key="15">
    <citation type="journal article" date="1974" name="Helv. Chim. Acta">
        <title>Total synthesis of human insulin under directed formation of the disulfide bonds.</title>
        <authorList>
            <person name="Sieber P."/>
            <person name="Kamber B."/>
            <person name="Hartmann A."/>
            <person name="Joehl A."/>
            <person name="Riniker B."/>
            <person name="Rittel W."/>
        </authorList>
    </citation>
    <scope>SYNTHESIS</scope>
</reference>
<reference key="16">
    <citation type="journal article" date="1973" name="Hoppe-Seyler's Z. Physiol. Chem.">
        <title>Studies on polypeptides, IV. The synthesis of C-peptide of human proinsulin.</title>
        <authorList>
            <person name="Naithani V.K."/>
        </authorList>
    </citation>
    <scope>SYNTHESIS OF 57-87</scope>
</reference>
<reference key="17">
    <citation type="journal article" date="1973" name="Chem. Ber.">
        <title>Synthesis of peptides with the properties of human proinsulin C peptides (hC peptide). 3. Synthesis of the sequences 14-17 and 9-13 of human proinsulin C peptides.</title>
        <authorList>
            <person name="Geiger R."/>
            <person name="Volk A."/>
        </authorList>
    </citation>
    <scope>SYNTHESIS OF 65-69 AND 70-73</scope>
</reference>
<reference key="18">
    <citation type="journal article" date="1973" name="Chem. Ber.">
        <title>Synthesis of peptides with the properties of human proinsulin C peptides (hC peptide). I. Scheme for the synthesis and preparation of the sequence 28-31 of human proinsulin C peptide.</title>
        <authorList>
            <person name="Geiger R."/>
            <person name="Jaeger G."/>
            <person name="Keonig W."/>
            <person name="Treuth G."/>
        </authorList>
    </citation>
    <scope>SYNTHESIS OF 84-87</scope>
</reference>
<reference key="19">
    <citation type="journal article" date="1983" name="Proc. Natl. Acad. Sci. U.S.A.">
        <title>Studies on mutant human insulin genes: identification and sequence analysis of a gene encoding [SerB24]insulin.</title>
        <authorList>
            <person name="Haneda M."/>
            <person name="Chan S.J."/>
            <person name="Kwok S.C.M."/>
            <person name="Rubenstein A.H."/>
            <person name="Steiner D.F."/>
        </authorList>
    </citation>
    <scope>VARIANT HPRI SER-48</scope>
</reference>
<reference key="20">
    <citation type="journal article" date="1983" name="Proc. Natl. Acad. Sci. U.S.A.">
        <title>Identification of a mutant human insulin predicted to contain a serine-for-phenylalanine substitution.</title>
        <authorList>
            <person name="Shoelson S."/>
            <person name="Fickova M."/>
            <person name="Haneda M."/>
            <person name="Nahum A."/>
            <person name="Musso G."/>
            <person name="Kaiser E.T."/>
            <person name="Rubenstein A.H."/>
            <person name="Tager H."/>
        </authorList>
    </citation>
    <scope>VARIANT HPRI SER-48</scope>
    <scope>VARIANT LEU-49</scope>
</reference>
<reference key="21">
    <citation type="journal article" date="1987" name="Proc. Natl. Acad. Sci. U.S.A.">
        <title>A mutation in the B chain coding region is associated with impaired proinsulin conversion in a family with hyperproinsulinemia.</title>
        <authorList>
            <person name="Chan S.J."/>
            <person name="Seino S."/>
            <person name="Gruppuso P.A."/>
            <person name="Schwartz R."/>
            <person name="Steiner D.F."/>
        </authorList>
    </citation>
    <scope>VARIANT HPRI ASP-34</scope>
</reference>
<reference key="22">
    <citation type="journal article" date="1986" name="J. Clin. Invest.">
        <title>Structurally abnormal insulin in a diabetic patient. Characterization of the mutant insulin A3 (Val--&gt;Leu) isolated from the pancreas.</title>
        <authorList>
            <person name="Sakura H."/>
            <person name="Iwamoto Y."/>
            <person name="Sakamoto Y."/>
            <person name="Kuzuya T."/>
            <person name="Hirata H."/>
        </authorList>
    </citation>
    <scope>VARIANT WAKAYAMA LEU-92</scope>
</reference>
<reference key="23">
    <citation type="journal article" date="1990" name="J. Clin. Endocrinol. Metab.">
        <title>Two unrelated patients with familial hyperproinsulinemia due to a mutation substituting histidine for arginine at position 65 in the proinsulin molecule: identification of the mutation by direct sequencing of genomic deoxyribonucleic acid amplified by polymerase chain reaction.</title>
        <authorList>
            <person name="Barbetti F."/>
            <person name="Raben N."/>
            <person name="Kadowaki T."/>
            <person name="Cama A."/>
            <person name="Accili D."/>
            <person name="Gabbay K.H."/>
            <person name="Merenich J.A."/>
            <person name="Taylor S.I."/>
            <person name="Roth J."/>
        </authorList>
    </citation>
    <scope>VARIANT HPRI HIS-89</scope>
</reference>
<reference key="24">
    <citation type="journal article" date="1985" name="J. Clin. Invest.">
        <title>Posttranslational cleavage of proinsulin is blocked by a point mutation in familial hyperproinsulinemia.</title>
        <authorList>
            <person name="Shibasaki Y."/>
            <person name="Kawakami T."/>
            <person name="Kanazawa Y."/>
            <person name="Akanuma Y."/>
            <person name="Takaku F."/>
        </authorList>
    </citation>
    <scope>VARIANT HPRI HIS-89</scope>
</reference>
<reference key="25">
    <citation type="journal article" date="1992" name="J. Clin. Invest.">
        <title>A novel point mutation in the human insulin gene giving rise to hyperproinsulinemia (proinsulin Kyoto).</title>
        <authorList>
            <person name="Yano H."/>
            <person name="Kitano N."/>
            <person name="Morimoto M."/>
            <person name="Polonsky K.S."/>
            <person name="Imura H."/>
            <person name="Seino Y."/>
        </authorList>
    </citation>
    <scope>VARIANT HPRI LEU-89</scope>
</reference>
<reference key="26">
    <citation type="journal article" date="1990" name="Biochemistry">
        <title>Toward the solution structure of human insulin: sequential 2D 1H NMR assignment of a des-pentapeptide analogue and comparison with crystal structure.</title>
        <authorList>
            <person name="Hua Q.-X."/>
            <person name="Weiss M.A."/>
        </authorList>
    </citation>
    <scope>STRUCTURE BY NMR</scope>
</reference>
<reference key="27">
    <citation type="journal article" date="1991" name="Biochemistry">
        <title>Comparative 2D NMR studies of human insulin and des-pentapeptide insulin: sequential resonance assignment and implications for protein dynamics and receptor recognition.</title>
        <authorList>
            <person name="Hua Q.-X."/>
            <person name="Weiss M.A."/>
        </authorList>
    </citation>
    <scope>STRUCTURE BY NMR</scope>
</reference>
<reference key="28">
    <citation type="journal article" date="1991" name="Biochim. Biophys. Acta">
        <title>Two-dimensional NMR studies of Des-(B26-B30)-insulin: sequence-specific resonance assignments and effects of solvent composition.</title>
        <authorList>
            <person name="Hua Q.-X."/>
            <person name="Weiss M.A."/>
        </authorList>
    </citation>
    <scope>STRUCTURE BY NMR</scope>
</reference>
<reference key="29">
    <citation type="journal article" date="1992" name="J. Mol. Biol.">
        <title>Three-dimensional solution structure of an insulin dimer. A study of the B9(Asp) mutant of human insulin using nuclear magnetic resonance, distance geometry and restrained molecular dynamics.</title>
        <authorList>
            <person name="Joergensen A.M.M."/>
            <person name="Kristensen S.M."/>
            <person name="Led J.J."/>
            <person name="Balschmidt P."/>
        </authorList>
    </citation>
    <scope>STRUCTURE BY NMR OF 90-110 AND 25-54</scope>
    <scope>DISULFIDE BONDS</scope>
</reference>
<reference key="30">
    <citation type="journal article" date="1993" name="Proc. Natl. Acad. Sci. U.S.A.">
        <title>Paradoxical structure and function in a mutant human insulin associated with diabetes mellitus.</title>
        <authorList>
            <person name="Hua Q.-X."/>
            <person name="Shoelson S.E."/>
            <person name="Inouye K."/>
            <person name="Weiss M.A."/>
        </authorList>
    </citation>
    <scope>STRUCTURE BY NMR OF 90-110 AND 25-54 OF VARIANT HPRI SER-48</scope>
    <scope>DISULFIDE BONDS</scope>
</reference>
<reference key="31">
    <citation type="journal article" date="1997" name="Biochemistry">
        <title>Solution structures of the R6 human insulin hexamer.</title>
        <authorList>
            <person name="Chang X."/>
            <person name="Joergensen A.M."/>
            <person name="Bardrum P."/>
            <person name="Led J.J."/>
        </authorList>
    </citation>
    <scope>STRUCTURE BY NMR OF 90-110 AND 25-54</scope>
    <scope>DISULFIDE BONDS</scope>
</reference>
<reference key="32">
    <citation type="journal article" date="2007" name="Proc. Natl. Acad. Sci. U.S.A.">
        <title>Insulin gene mutations as a cause of permanent neonatal diabetes.</title>
        <authorList>
            <person name="Stoy J."/>
            <person name="Edghill E.L."/>
            <person name="Flanagan S.E."/>
            <person name="Ye H."/>
            <person name="Paz V.P."/>
            <person name="Pluzhnikov A."/>
            <person name="Below J.E."/>
            <person name="Hayes M.G."/>
            <person name="Cox N.J."/>
            <person name="Lipkind G.M."/>
            <person name="Lipton R.B."/>
            <person name="Greeley S.A."/>
            <person name="Patch A.M."/>
            <person name="Ellard S."/>
            <person name="Steiner D.F."/>
            <person name="Hattersley A.T."/>
            <person name="Philipson L.H."/>
            <person name="Bell G.I."/>
        </authorList>
    </citation>
    <scope>VARIANTS PNDM4 ASP-24; ARG-32; SER-32; GLY-43; VAL-47; CYS-48; CYS-89; CYS-90; TYR-96 AND CYS-108</scope>
</reference>
<reference key="33">
    <citation type="journal article" date="2008" name="Diabetes">
        <title>Insulin mutation screening in 1,044 patients with diabetes: mutations in the INS gene are a common cause of neonatal diabetes but a rare cause of diabetes diagnosed in childhood or adulthood.</title>
        <authorList>
            <person name="Edghill E.L."/>
            <person name="Flanagan S.E."/>
            <person name="Patch A.M."/>
            <person name="Boustred C."/>
            <person name="Parrish A."/>
            <person name="Shields B."/>
            <person name="Shepherd M.H."/>
            <person name="Hussain K."/>
            <person name="Kapoor R.R."/>
            <person name="Malecki M."/>
            <person name="MacDonald M.J."/>
            <person name="Stoy J."/>
            <person name="Steiner D.F."/>
            <person name="Philipson L.H."/>
            <person name="Bell G.I."/>
            <person name="Hattersley A.T."/>
            <person name="Ellard S."/>
        </authorList>
    </citation>
    <scope>VARIANTS PNDM4 ASP-24; ASP-29; ARG-32; SER-32; PRO-35; GLY-43; VAL-47; CYS-48; ARG-84; CYS-89; CYS-90; SER-96; TYR-96; CYS-101; CYS-103 AND CYS-108</scope>
    <scope>VARIANT MODY10 CYS-6</scope>
    <scope>VARIANT MET-68</scope>
</reference>
<reference key="34">
    <citation type="journal article" date="2008" name="Diabetes">
        <title>Mutations in the insulin gene can cause MODY and autoantibody-negative type 1 diabetes.</title>
        <authorList>
            <person name="Molven A."/>
            <person name="Ringdal M."/>
            <person name="Nordbo A.M."/>
            <person name="Raeder H."/>
            <person name="Stoy J."/>
            <person name="Lipkind G.M."/>
            <person name="Steiner D.F."/>
            <person name="Philipson L.H."/>
            <person name="Bergmann I."/>
            <person name="Aarskog D."/>
            <person name="Undlien D.E."/>
            <person name="Joner G."/>
            <person name="Sovik O."/>
            <person name="Bell G.I."/>
            <person name="Njolstad P.R."/>
        </authorList>
    </citation>
    <scope>VARIANT MODY10 GLN-46</scope>
    <scope>VARIANT T1D2 CYS-55</scope>
</reference>
<reference key="35">
    <citation type="journal article" date="2010" name="BMC Med. Genet.">
        <title>Further evidence that mutations in INS can be a rare cause of Maturity-Onset Diabetes of the Young (MODY).</title>
        <authorList>
            <person name="Boesgaard T.W."/>
            <person name="Pruhova S."/>
            <person name="Andersson E.A."/>
            <person name="Cinek O."/>
            <person name="Obermannova B."/>
            <person name="Lauenborg J."/>
            <person name="Damm P."/>
            <person name="Bergholdt R."/>
            <person name="Pociot F."/>
            <person name="Pisinger C."/>
            <person name="Barbetti F."/>
            <person name="Lebl J."/>
            <person name="Pedersen O."/>
            <person name="Hansen T."/>
        </authorList>
    </citation>
    <scope>VARIANTS MODY10 HIS-6 AND GLN-46</scope>
</reference>
<reference key="36">
    <citation type="journal article" date="2014" name="PLoS ONE">
        <title>Structural and functional study of the GlnB22-insulin mutant responsible for maturity-onset diabetes of the young.</title>
        <authorList>
            <person name="Krizkova K."/>
            <person name="Veverka V."/>
            <person name="Maletinska L."/>
            <person name="Hexnerova R."/>
            <person name="Brzozowski A.M."/>
            <person name="Jiracek J."/>
            <person name="Zakova L."/>
        </authorList>
    </citation>
    <scope>VARIANT MODY10 GLN-46</scope>
    <scope>CHARACTERIZATION OF VARIANT MODY10 GLN-46</scope>
    <scope>STRUCTURE BY NMR OF 90-110 AND 25-54</scope>
    <scope>DISULFIDE BONDS OF VARIANT MODY10 GLN-46</scope>
    <scope>SUBUNIT</scope>
</reference>
<name>INS_HUMAN</name>
<keyword id="KW-0002">3D-structure</keyword>
<keyword id="KW-0025">Alternative splicing</keyword>
<keyword id="KW-0119">Carbohydrate metabolism</keyword>
<keyword id="KW-0165">Cleavage on pair of basic residues</keyword>
<keyword id="KW-0219">Diabetes mellitus</keyword>
<keyword id="KW-0903">Direct protein sequencing</keyword>
<keyword id="KW-0225">Disease variant</keyword>
<keyword id="KW-1015">Disulfide bond</keyword>
<keyword id="KW-0313">Glucose metabolism</keyword>
<keyword id="KW-0372">Hormone</keyword>
<keyword id="KW-0582">Pharmaceutical</keyword>
<keyword id="KW-1267">Proteomics identification</keyword>
<keyword id="KW-1185">Reference proteome</keyword>
<keyword id="KW-0964">Secreted</keyword>
<keyword id="KW-0732">Signal</keyword>
<proteinExistence type="evidence at protein level"/>
<feature type="signal peptide" evidence="2">
    <location>
        <begin position="1"/>
        <end position="24"/>
    </location>
</feature>
<feature type="peptide" id="PRO_0000015819" description="Insulin B chain">
    <location>
        <begin position="25"/>
        <end position="54"/>
    </location>
</feature>
<feature type="propeptide" id="PRO_0000015820" description="C peptide">
    <location>
        <begin position="57"/>
        <end position="87"/>
    </location>
</feature>
<feature type="peptide" id="PRO_0000015821" description="Insulin A chain">
    <location>
        <begin position="90"/>
        <end position="110"/>
    </location>
</feature>
<feature type="disulfide bond" description="Interchain (between B and A chains)" evidence="1 9 16 19 20 21 22 23 24">
    <location>
        <begin position="31"/>
        <end position="96"/>
    </location>
</feature>
<feature type="disulfide bond" description="Interchain (between B and A chains)" evidence="1 9 16 19 20 21 22 23 24">
    <location>
        <begin position="43"/>
        <end position="109"/>
    </location>
</feature>
<feature type="disulfide bond" evidence="1 9 13 16 17 19 20 21 22 23 24">
    <location>
        <begin position="95"/>
        <end position="100"/>
    </location>
</feature>
<feature type="sequence variant" id="VAR_063721" description="In MODY10; dbSNP:rs121908278." evidence="5">
    <original>R</original>
    <variation>C</variation>
    <location>
        <position position="6"/>
    </location>
</feature>
<feature type="sequence variant" id="VAR_063722" description="In MODY10; dbSNP:rs121908259." evidence="7">
    <original>R</original>
    <variation>H</variation>
    <location>
        <position position="6"/>
    </location>
</feature>
<feature type="sequence variant" id="VAR_063723" description="In PNDM4; dbSNP:rs80356663." evidence="4 5">
    <original>A</original>
    <variation>D</variation>
    <location>
        <position position="24"/>
    </location>
</feature>
<feature type="sequence variant" id="VAR_063724" description="In PNDM4; dbSNP:rs121908272." evidence="5">
    <original>H</original>
    <variation>D</variation>
    <location>
        <position position="29"/>
    </location>
</feature>
<feature type="sequence variant" id="VAR_063725" description="In PNDM4; dbSNP:rs80356664." evidence="4 5">
    <original>G</original>
    <variation>R</variation>
    <location>
        <position position="32"/>
    </location>
</feature>
<feature type="sequence variant" id="VAR_063726" description="In PNDM4; dbSNP:rs80356664." evidence="4 5">
    <original>G</original>
    <variation>S</variation>
    <location>
        <position position="32"/>
    </location>
</feature>
<feature type="sequence variant" id="VAR_003971" description="In HPRI; Providence; dbSNP:rs121918101." evidence="10">
    <original>H</original>
    <variation>D</variation>
    <location>
        <position position="34"/>
    </location>
</feature>
<feature type="sequence variant" id="VAR_063727" description="In PNDM4; dbSNP:rs121908273." evidence="5">
    <original>L</original>
    <variation>P</variation>
    <location>
        <position position="35"/>
    </location>
</feature>
<feature type="sequence variant" id="VAR_063728" description="In PNDM4; dbSNP:rs80356666." evidence="4 5">
    <original>C</original>
    <variation>G</variation>
    <location>
        <position position="43"/>
    </location>
</feature>
<feature type="sequence variant" id="VAR_063729" description="In MODY10; reduces binding affinity to INSR; reduces biological activity; reduces folding properties; dbSNP:rs121908260." evidence="6 7 9">
    <original>R</original>
    <variation>Q</variation>
    <location>
        <position position="46"/>
    </location>
</feature>
<feature type="sequence variant" id="VAR_063730" description="In PNDM4; dbSNP:rs80356667." evidence="4 5">
    <original>G</original>
    <variation>V</variation>
    <location>
        <position position="47"/>
    </location>
</feature>
<feature type="sequence variant" id="VAR_063731" description="In PNDM4; dbSNP:rs80356668." evidence="4 5">
    <original>F</original>
    <variation>C</variation>
    <location>
        <position position="48"/>
    </location>
</feature>
<feature type="sequence variant" id="VAR_003972" description="In HPRI; Los-Angeles; dbSNP:rs80356668." evidence="14 15 16">
    <original>F</original>
    <variation>S</variation>
    <location>
        <position position="48"/>
    </location>
</feature>
<feature type="sequence variant" id="VAR_003973" description="In Chicago; dbSNP:rs148685531." evidence="15">
    <original>F</original>
    <variation>L</variation>
    <location>
        <position position="49"/>
    </location>
</feature>
<feature type="sequence variant" id="VAR_063732" description="In T1D2; dbSNP:rs121908261." evidence="6">
    <original>R</original>
    <variation>C</variation>
    <location>
        <position position="55"/>
    </location>
</feature>
<feature type="sequence variant" id="VAR_063733" description="In dbSNP:rs121908279." evidence="5">
    <original>L</original>
    <variation>M</variation>
    <location>
        <position position="68"/>
    </location>
</feature>
<feature type="sequence variant" id="VAR_063734" description="In PNDM4; uncertain significance; dbSNP:rs121908274." evidence="5">
    <original>G</original>
    <variation>R</variation>
    <location>
        <position position="84"/>
    </location>
</feature>
<feature type="sequence variant" id="VAR_063735" description="In PNDM4; dbSNP:rs80356669." evidence="4 5">
    <original>R</original>
    <variation>C</variation>
    <location>
        <position position="89"/>
    </location>
</feature>
<feature type="sequence variant" id="VAR_003974" description="In HPRI; impairs post-translational cleavage; dbSNP:rs28933985." evidence="8 12">
    <original>R</original>
    <variation>H</variation>
    <location>
        <position position="89"/>
    </location>
</feature>
<feature type="sequence variant" id="VAR_003975" description="In HPRI; Kyoto; dbSNP:rs28933985." evidence="3">
    <original>R</original>
    <variation>L</variation>
    <location>
        <position position="89"/>
    </location>
</feature>
<feature type="sequence variant" id="VAR_063736" description="In PNDM4; dbSNP:rs80356670." evidence="4 5">
    <original>G</original>
    <variation>C</variation>
    <location>
        <position position="90"/>
    </location>
</feature>
<feature type="sequence variant" id="VAR_003976" description="In Wakayama; dbSNP:rs121918102." evidence="11">
    <original>V</original>
    <variation>L</variation>
    <location>
        <position position="92"/>
    </location>
</feature>
<feature type="sequence variant" id="VAR_063737" description="In PNDM4; dbSNP:rs80356671." evidence="5">
    <original>C</original>
    <variation>S</variation>
    <location>
        <position position="96"/>
    </location>
</feature>
<feature type="sequence variant" id="VAR_063738" description="In PNDM4; dbSNP:rs80356671." evidence="4 5">
    <original>C</original>
    <variation>Y</variation>
    <location>
        <position position="96"/>
    </location>
</feature>
<feature type="sequence variant" id="VAR_063739" description="In PNDM4; dbSNP:rs121908276." evidence="5">
    <original>S</original>
    <variation>C</variation>
    <location>
        <position position="101"/>
    </location>
</feature>
<feature type="sequence variant" id="VAR_063740" description="In PNDM4; dbSNP:rs121908277." evidence="5">
    <original>Y</original>
    <variation>C</variation>
    <location>
        <position position="103"/>
    </location>
</feature>
<feature type="sequence variant" id="VAR_063741" description="In PNDM4; dbSNP:rs80356672." evidence="4 5">
    <original>Y</original>
    <variation>C</variation>
    <location>
        <position position="108"/>
    </location>
</feature>
<feature type="helix" evidence="31">
    <location>
        <begin position="25"/>
        <end position="27"/>
    </location>
</feature>
<feature type="helix" evidence="25">
    <location>
        <begin position="28"/>
        <end position="31"/>
    </location>
</feature>
<feature type="helix" evidence="29">
    <location>
        <begin position="33"/>
        <end position="43"/>
    </location>
</feature>
<feature type="helix" evidence="29">
    <location>
        <begin position="44"/>
        <end position="46"/>
    </location>
</feature>
<feature type="strand" evidence="29">
    <location>
        <begin position="48"/>
        <end position="50"/>
    </location>
</feature>
<feature type="strand" evidence="26">
    <location>
        <begin position="56"/>
        <end position="58"/>
    </location>
</feature>
<feature type="turn" evidence="28">
    <location>
        <begin position="59"/>
        <end position="66"/>
    </location>
</feature>
<feature type="strand" evidence="28">
    <location>
        <begin position="74"/>
        <end position="76"/>
    </location>
</feature>
<feature type="helix" evidence="28">
    <location>
        <begin position="79"/>
        <end position="81"/>
    </location>
</feature>
<feature type="turn" evidence="28">
    <location>
        <begin position="84"/>
        <end position="86"/>
    </location>
</feature>
<feature type="helix" evidence="29">
    <location>
        <begin position="91"/>
        <end position="97"/>
    </location>
</feature>
<feature type="strand" evidence="30">
    <location>
        <begin position="98"/>
        <end position="101"/>
    </location>
</feature>
<feature type="helix" evidence="29">
    <location>
        <begin position="102"/>
        <end position="106"/>
    </location>
</feature>
<feature type="turn" evidence="27">
    <location>
        <begin position="107"/>
        <end position="109"/>
    </location>
</feature>
<organism>
    <name type="scientific">Homo sapiens</name>
    <name type="common">Human</name>
    <dbReference type="NCBI Taxonomy" id="9606"/>
    <lineage>
        <taxon>Eukaryota</taxon>
        <taxon>Metazoa</taxon>
        <taxon>Chordata</taxon>
        <taxon>Craniata</taxon>
        <taxon>Vertebrata</taxon>
        <taxon>Euteleostomi</taxon>
        <taxon>Mammalia</taxon>
        <taxon>Eutheria</taxon>
        <taxon>Euarchontoglires</taxon>
        <taxon>Primates</taxon>
        <taxon>Haplorrhini</taxon>
        <taxon>Catarrhini</taxon>
        <taxon>Hominidae</taxon>
        <taxon>Homo</taxon>
    </lineage>
</organism>
<evidence type="ECO:0000269" key="1">
    <source>
    </source>
</evidence>
<evidence type="ECO:0000269" key="2">
    <source>
    </source>
</evidence>
<evidence type="ECO:0000269" key="3">
    <source>
    </source>
</evidence>
<evidence type="ECO:0000269" key="4">
    <source>
    </source>
</evidence>
<evidence type="ECO:0000269" key="5">
    <source>
    </source>
</evidence>
<evidence type="ECO:0000269" key="6">
    <source>
    </source>
</evidence>
<evidence type="ECO:0000269" key="7">
    <source>
    </source>
</evidence>
<evidence type="ECO:0000269" key="8">
    <source>
    </source>
</evidence>
<evidence type="ECO:0000269" key="9">
    <source>
    </source>
</evidence>
<evidence type="ECO:0000269" key="10">
    <source>
    </source>
</evidence>
<evidence type="ECO:0000269" key="11">
    <source>
    </source>
</evidence>
<evidence type="ECO:0000269" key="12">
    <source>
    </source>
</evidence>
<evidence type="ECO:0000269" key="13">
    <source>
    </source>
</evidence>
<evidence type="ECO:0000269" key="14">
    <source>
    </source>
</evidence>
<evidence type="ECO:0000269" key="15">
    <source>
    </source>
</evidence>
<evidence type="ECO:0000269" key="16">
    <source>
    </source>
</evidence>
<evidence type="ECO:0000269" key="17">
    <source>
    </source>
</evidence>
<evidence type="ECO:0000305" key="18"/>
<evidence type="ECO:0007744" key="19">
    <source>
        <dbReference type="PDB" id="1AI0"/>
    </source>
</evidence>
<evidence type="ECO:0007744" key="20">
    <source>
        <dbReference type="PDB" id="1AIY"/>
    </source>
</evidence>
<evidence type="ECO:0007744" key="21">
    <source>
        <dbReference type="PDB" id="1HIQ"/>
    </source>
</evidence>
<evidence type="ECO:0007744" key="22">
    <source>
        <dbReference type="PDB" id="1MHI"/>
    </source>
</evidence>
<evidence type="ECO:0007744" key="23">
    <source>
        <dbReference type="PDB" id="2MVC"/>
    </source>
</evidence>
<evidence type="ECO:0007744" key="24">
    <source>
        <dbReference type="PDB" id="2MVD"/>
    </source>
</evidence>
<evidence type="ECO:0007829" key="25">
    <source>
        <dbReference type="PDB" id="1AIY"/>
    </source>
</evidence>
<evidence type="ECO:0007829" key="26">
    <source>
        <dbReference type="PDB" id="1EFE"/>
    </source>
</evidence>
<evidence type="ECO:0007829" key="27">
    <source>
        <dbReference type="PDB" id="1HIQ"/>
    </source>
</evidence>
<evidence type="ECO:0007829" key="28">
    <source>
        <dbReference type="PDB" id="1T0C"/>
    </source>
</evidence>
<evidence type="ECO:0007829" key="29">
    <source>
        <dbReference type="PDB" id="3W7Y"/>
    </source>
</evidence>
<evidence type="ECO:0007829" key="30">
    <source>
        <dbReference type="PDB" id="4EFX"/>
    </source>
</evidence>
<evidence type="ECO:0007829" key="31">
    <source>
        <dbReference type="PDB" id="8HSK"/>
    </source>
</evidence>
<protein>
    <recommendedName>
        <fullName>Insulin</fullName>
    </recommendedName>
    <component>
        <recommendedName>
            <fullName>Insulin B chain</fullName>
        </recommendedName>
    </component>
    <component>
        <recommendedName>
            <fullName>Insulin A chain</fullName>
        </recommendedName>
    </component>
</protein>
<sequence>MALWMRLLPLLALLALWGPDPAAAFVNQHLCGSHLVEALYLVCGERGFFYTPKTRREAEDLQVGQVELGGGPGAGSLQPLALEGSLQKRGIVEQCCTSICSLYQLENYCN</sequence>
<accession>P01308</accession>
<accession>Q5EEX2</accession>
<comment type="function">
    <text>Insulin decreases blood glucose concentration. It increases cell permeability to monosaccharides, amino acids and fatty acids. It accelerates glycolysis, the pentose phosphate cycle, and glycogen synthesis in liver.</text>
</comment>
<comment type="subunit">
    <text evidence="9">Heterodimer of a B chain and an A chain linked by two disulfide bonds (PubMed:25423173).</text>
</comment>
<comment type="interaction">
    <interactant intactId="EBI-7090529">
        <id>P01308</id>
    </interactant>
    <interactant intactId="EBI-10173507">
        <id>Q6UY14-3</id>
        <label>ADAMTSL4</label>
    </interactant>
    <organismsDiffer>false</organismsDiffer>
    <experiments>3</experiments>
</comment>
<comment type="interaction">
    <interactant intactId="EBI-7090529">
        <id>P01308</id>
    </interactant>
    <interactant intactId="EBI-3867333">
        <id>A8MQ03</id>
        <label>CYSRT1</label>
    </interactant>
    <organismsDiffer>false</organismsDiffer>
    <experiments>3</experiments>
</comment>
<comment type="interaction">
    <interactant intactId="EBI-7090529">
        <id>P01308</id>
    </interactant>
    <interactant intactId="EBI-15607031">
        <id>P14735-1</id>
        <label>IDE</label>
    </interactant>
    <organismsDiffer>false</organismsDiffer>
    <experiments>3</experiments>
</comment>
<comment type="interaction">
    <interactant intactId="EBI-7090529">
        <id>P01308</id>
    </interactant>
    <interactant intactId="EBI-7090529">
        <id>P01308</id>
        <label>INS</label>
    </interactant>
    <organismsDiffer>false</organismsDiffer>
    <experiments>19</experiments>
</comment>
<comment type="interaction">
    <interactant intactId="EBI-7090529">
        <id>P01308</id>
    </interactant>
    <interactant intactId="EBI-9984921">
        <id>P06213-2</id>
        <label>INSR</label>
    </interactant>
    <organismsDiffer>false</organismsDiffer>
    <experiments>6</experiments>
</comment>
<comment type="interaction">
    <interactant intactId="EBI-7090529">
        <id>P01308</id>
    </interactant>
    <interactant intactId="EBI-11959885">
        <id>Q07627</id>
        <label>KRTAP1-1</label>
    </interactant>
    <organismsDiffer>false</organismsDiffer>
    <experiments>3</experiments>
</comment>
<comment type="interaction">
    <interactant intactId="EBI-7090529">
        <id>P01308</id>
    </interactant>
    <interactant intactId="EBI-11749135">
        <id>Q8IUG1</id>
        <label>KRTAP1-3</label>
    </interactant>
    <organismsDiffer>false</organismsDiffer>
    <experiments>3</experiments>
</comment>
<comment type="interaction">
    <interactant intactId="EBI-7090529">
        <id>P01308</id>
    </interactant>
    <interactant intactId="EBI-22310682">
        <id>P0DPK4</id>
        <label>NOTCH2NLC</label>
    </interactant>
    <organismsDiffer>false</organismsDiffer>
    <experiments>3</experiments>
</comment>
<comment type="interaction">
    <interactant intactId="EBI-20765227">
        <id>PRO_0000015820</id>
    </interactant>
    <interactant intactId="EBI-351896">
        <id>P11142</id>
        <label>HSPA8</label>
    </interactant>
    <organismsDiffer>false</organismsDiffer>
    <experiments>2</experiments>
</comment>
<comment type="subcellular location">
    <subcellularLocation>
        <location>Secreted</location>
    </subcellularLocation>
</comment>
<comment type="alternative products">
    <event type="alternative splicing"/>
    <isoform>
        <id>P01308-1</id>
        <name>1</name>
        <sequence type="displayed"/>
    </isoform>
    <isoform>
        <id>F8WCM5-1</id>
        <name>2</name>
        <name>INS-IGF2</name>
        <sequence type="external"/>
    </isoform>
</comment>
<comment type="disease" evidence="3 8 10 12 14 15 16">
    <disease id="DI-01585">
        <name>Hyperproinsulinemia</name>
        <acronym>HPRI</acronym>
        <description>An autosomal dominant condition characterized by elevated levels of serum proinsulin-like material.</description>
        <dbReference type="MIM" id="616214"/>
    </disease>
    <text>The disease is caused by variants affecting the gene represented in this entry.</text>
</comment>
<comment type="disease" evidence="6">
    <disease id="DI-02788">
        <name>Type 1 diabetes mellitus 2</name>
        <acronym>T1D2</acronym>
        <description>A multifactorial disorder of glucose homeostasis that is characterized by susceptibility to ketoacidosis in the absence of insulin therapy. Clinical features are polydipsia, polyphagia and polyuria which result from hyperglycemia-induced osmotic diuresis and secondary thirst. These derangements result in long-term complications that affect the eyes, kidneys, nerves, and blood vessels.</description>
        <dbReference type="MIM" id="125852"/>
    </disease>
    <text>The disease is caused by variants affecting the gene represented in this entry.</text>
</comment>
<comment type="disease" evidence="4 5">
    <disease id="DI-05825">
        <name>Diabetes mellitus, permanent neonatal, 4</name>
        <acronym>PNDM4</acronym>
        <description>A form of permanent neonatal diabetes mellitus, a type of diabetes characterized by onset of persistent hyperglycemia within the first six months of life. Initial clinical manifestations include intrauterine growth retardation, hyperglycemia, glycosuria, osmotic polyuria, severe dehydration, and failure to thrive. PNDM4 transmission pattern is consistent with autosomal dominant or autosomal recessive inheritance.</description>
        <dbReference type="MIM" id="618858"/>
    </disease>
    <text>The disease is caused by variants affecting the gene represented in this entry.</text>
</comment>
<comment type="disease" evidence="5 6 7 9">
    <disease id="DI-02786">
        <name>Maturity-onset diabetes of the young 10</name>
        <acronym>MODY10</acronym>
        <description>A form of diabetes that is characterized by an autosomal dominant mode of inheritance, onset in childhood or early adulthood (usually before 25 years of age), a primary defect in insulin secretion and frequent insulin-independence at the beginning of the disease.</description>
        <dbReference type="MIM" id="613370"/>
    </disease>
    <text>The disease is caused by variants affecting the gene represented in this entry.</text>
</comment>
<comment type="pharmaceutical">
    <text>Available under the names Humulin or Humalog (Eli Lilly) and Novolin (Novo Nordisk). Used in the treatment of diabetes. Humalog is an insulin analog with 52-Lys-Pro-53 instead of 52-Pro-Lys-53.</text>
</comment>
<comment type="similarity">
    <text evidence="18">Belongs to the insulin family.</text>
</comment>
<comment type="sequence caution" evidence="18">
    <conflict type="erroneous gene model prediction">
        <sequence resource="EMBL-CDS" id="AAA59179"/>
    </conflict>
</comment>
<comment type="online information" name="Protein Spotlight">
    <link uri="https://www.proteinspotlight.org/back_issues/009"/>
    <text>Protein of the 20th century - Issue 9 of April 2001</text>
</comment>
<comment type="online information" name="Wikipedia">
    <link uri="https://en.wikipedia.org/wiki/Insulin"/>
    <text>Insulin entry</text>
</comment>
<gene>
    <name type="primary">INS</name>
</gene>